<name>H2B1C_HUMAN</name>
<keyword id="KW-0002">3D-structure</keyword>
<keyword id="KW-0007">Acetylation</keyword>
<keyword id="KW-0013">ADP-ribosylation</keyword>
<keyword id="KW-0044">Antibiotic</keyword>
<keyword id="KW-0929">Antimicrobial</keyword>
<keyword id="KW-0158">Chromosome</keyword>
<keyword id="KW-0903">Direct protein sequencing</keyword>
<keyword id="KW-0238">DNA-binding</keyword>
<keyword id="KW-0325">Glycoprotein</keyword>
<keyword id="KW-0379">Hydroxylation</keyword>
<keyword id="KW-1017">Isopeptide bond</keyword>
<keyword id="KW-0488">Methylation</keyword>
<keyword id="KW-0544">Nucleosome core</keyword>
<keyword id="KW-0539">Nucleus</keyword>
<keyword id="KW-0597">Phosphoprotein</keyword>
<keyword id="KW-1185">Reference proteome</keyword>
<keyword id="KW-0832">Ubl conjugation</keyword>
<feature type="initiator methionine" description="Removed" evidence="1 10 12 13 30 31">
    <location>
        <position position="1"/>
    </location>
</feature>
<feature type="chain" id="PRO_0000071826" description="Histone H2B type 1-C/E/F/G/I">
    <location>
        <begin position="2"/>
        <end position="126"/>
    </location>
</feature>
<feature type="region of interest" description="Disordered" evidence="9">
    <location>
        <begin position="1"/>
        <end position="36"/>
    </location>
</feature>
<feature type="compositionally biased region" description="Low complexity" evidence="9">
    <location>
        <begin position="1"/>
        <end position="12"/>
    </location>
</feature>
<feature type="modified residue" description="N-acetylproline" evidence="1">
    <location>
        <position position="2"/>
    </location>
</feature>
<feature type="modified residue" description="ADP-ribosyl glutamic acid" evidence="25">
    <location>
        <position position="3"/>
    </location>
</feature>
<feature type="modified residue" description="N6-(2-hydroxyisobutyryl)lysine; alternate" evidence="22">
    <location>
        <position position="6"/>
    </location>
</feature>
<feature type="modified residue" description="N6-(beta-hydroxybutyryl)lysine; alternate" evidence="24">
    <location>
        <position position="6"/>
    </location>
</feature>
<feature type="modified residue" description="N6-acetyllysine; alternate" evidence="14 16">
    <location>
        <position position="6"/>
    </location>
</feature>
<feature type="modified residue" description="N6-butyryllysine; alternate" evidence="23">
    <location>
        <position position="6"/>
    </location>
</feature>
<feature type="modified residue" description="N6-crotonyllysine; alternate" evidence="19">
    <location>
        <position position="6"/>
    </location>
</feature>
<feature type="modified residue" description="N6-lactoyllysine; alternate" evidence="27">
    <location>
        <position position="6"/>
    </location>
</feature>
<feature type="modified residue" description="ADP-ribosylserine" evidence="28">
    <location>
        <position position="7"/>
    </location>
</feature>
<feature type="modified residue" description="N6-(beta-hydroxybutyryl)lysine; alternate" evidence="24">
    <location>
        <position position="12"/>
    </location>
</feature>
<feature type="modified residue" description="N6-acetyllysine; alternate" evidence="16">
    <location>
        <position position="12"/>
    </location>
</feature>
<feature type="modified residue" description="N6-crotonyllysine; alternate" evidence="19">
    <location>
        <position position="12"/>
    </location>
</feature>
<feature type="modified residue" description="N6-lactoyllysine; alternate" evidence="27">
    <location>
        <position position="12"/>
    </location>
</feature>
<feature type="modified residue" description="N6-(2-hydroxyisobutyryl)lysine; alternate" evidence="22">
    <location>
        <position position="13"/>
    </location>
</feature>
<feature type="modified residue" description="N6-acetyllysine; alternate" evidence="14 16">
    <location>
        <position position="13"/>
    </location>
</feature>
<feature type="modified residue" description="N6-crotonyllysine; alternate" evidence="19">
    <location>
        <position position="13"/>
    </location>
</feature>
<feature type="modified residue" description="Phosphoserine; by STK4/MST1" evidence="11">
    <location>
        <position position="15"/>
    </location>
</feature>
<feature type="modified residue" description="N6-acetyllysine; alternate" evidence="14 16">
    <location>
        <position position="16"/>
    </location>
</feature>
<feature type="modified residue" description="N6-crotonyllysine; alternate" evidence="19">
    <location>
        <position position="16"/>
    </location>
</feature>
<feature type="modified residue" description="N6-lactoyllysine; alternate" evidence="27">
    <location>
        <position position="16"/>
    </location>
</feature>
<feature type="modified residue" description="N6-(beta-hydroxybutyryl)lysine; alternate" evidence="24">
    <location>
        <position position="17"/>
    </location>
</feature>
<feature type="modified residue" description="N6-acetyllysine; alternate" evidence="16">
    <location>
        <position position="17"/>
    </location>
</feature>
<feature type="modified residue" description="N6-crotonyllysine; alternate" evidence="19">
    <location>
        <position position="17"/>
    </location>
</feature>
<feature type="modified residue" description="N6-glutaryllysine; alternate" evidence="26">
    <location>
        <position position="17"/>
    </location>
</feature>
<feature type="modified residue" description="N6-lactoyllysine; alternate" evidence="27">
    <location>
        <position position="17"/>
    </location>
</feature>
<feature type="modified residue" description="N6-(2-hydroxyisobutyryl)lysine; alternate" evidence="22">
    <location>
        <position position="21"/>
    </location>
</feature>
<feature type="modified residue" description="N6-(beta-hydroxybutyryl)lysine; alternate" evidence="24">
    <location>
        <position position="21"/>
    </location>
</feature>
<feature type="modified residue" description="N6-acetyllysine; alternate" evidence="14 16">
    <location>
        <position position="21"/>
    </location>
</feature>
<feature type="modified residue" description="N6-butyryllysine; alternate" evidence="23">
    <location>
        <position position="21"/>
    </location>
</feature>
<feature type="modified residue" description="N6-crotonyllysine; alternate" evidence="19">
    <location>
        <position position="21"/>
    </location>
</feature>
<feature type="modified residue" description="N6-lactoyllysine; alternate" evidence="27">
    <location>
        <position position="21"/>
    </location>
</feature>
<feature type="modified residue" description="N6-(2-hydroxyisobutyryl)lysine; alternate" evidence="22">
    <location>
        <position position="24"/>
    </location>
</feature>
<feature type="modified residue" description="N6-acetyllysine; alternate" evidence="2">
    <location>
        <position position="24"/>
    </location>
</feature>
<feature type="modified residue" description="N6-crotonyllysine; alternate" evidence="19">
    <location>
        <position position="24"/>
    </location>
</feature>
<feature type="modified residue" description="N6-lactoyllysine; alternate" evidence="27">
    <location>
        <position position="24"/>
    </location>
</feature>
<feature type="modified residue" description="N6-(2-hydroxyisobutyryl)lysine" evidence="22">
    <location>
        <position position="25"/>
    </location>
</feature>
<feature type="modified residue" description="N6-(2-hydroxyisobutyryl)lysine; alternate" evidence="22">
    <location>
        <position position="35"/>
    </location>
</feature>
<feature type="modified residue" description="N6-(beta-hydroxybutyryl)lysine; alternate" evidence="24">
    <location>
        <position position="35"/>
    </location>
</feature>
<feature type="modified residue" description="N6-crotonyllysine; alternate" evidence="19">
    <location>
        <position position="35"/>
    </location>
</feature>
<feature type="modified residue" description="N6-glutaryllysine; alternate" evidence="26">
    <location>
        <position position="35"/>
    </location>
</feature>
<feature type="modified residue" description="N6-succinyllysine; alternate" evidence="21">
    <location>
        <position position="35"/>
    </location>
</feature>
<feature type="modified residue" description="PolyADP-ribosyl glutamic acid" evidence="6">
    <location>
        <position position="36"/>
    </location>
</feature>
<feature type="modified residue" description="Phosphoserine; by AMPK" evidence="7">
    <location>
        <position position="37"/>
    </location>
</feature>
<feature type="modified residue" description="N6-(2-hydroxyisobutyryl)lysine; alternate" evidence="22">
    <location>
        <position position="44"/>
    </location>
</feature>
<feature type="modified residue" description="N6-glutaryllysine; alternate" evidence="26">
    <location>
        <position position="44"/>
    </location>
</feature>
<feature type="modified residue" description="N6-lactoyllysine; alternate" evidence="27">
    <location>
        <position position="44"/>
    </location>
</feature>
<feature type="modified residue" description="N6-(2-hydroxyisobutyryl)lysine; alternate" evidence="22">
    <location>
        <position position="47"/>
    </location>
</feature>
<feature type="modified residue" description="N6-glutaryllysine; alternate" evidence="26">
    <location>
        <position position="47"/>
    </location>
</feature>
<feature type="modified residue" description="N6-methyllysine; alternate" evidence="16">
    <location>
        <position position="47"/>
    </location>
</feature>
<feature type="modified residue" description="N6,N6-dimethyllysine; alternate" evidence="16">
    <location>
        <position position="58"/>
    </location>
</feature>
<feature type="modified residue" description="N6-(2-hydroxyisobutyryl)lysine; alternate" evidence="22">
    <location>
        <position position="58"/>
    </location>
</feature>
<feature type="modified residue" description="Dimethylated arginine" evidence="8">
    <location>
        <position position="80"/>
    </location>
</feature>
<feature type="modified residue" description="N6,N6,N6-trimethyllysine; alternate" evidence="8">
    <location>
        <position position="86"/>
    </location>
</feature>
<feature type="modified residue" description="N6-(2-hydroxyisobutyryl)lysine; alternate" evidence="22">
    <location>
        <position position="86"/>
    </location>
</feature>
<feature type="modified residue" description="N6-(beta-hydroxybutyryl)lysine; alternate" evidence="24">
    <location>
        <position position="86"/>
    </location>
</feature>
<feature type="modified residue" description="N6-acetyllysine; alternate" evidence="8">
    <location>
        <position position="86"/>
    </location>
</feature>
<feature type="modified residue" description="N6-lactoyllysine; alternate" evidence="27">
    <location>
        <position position="86"/>
    </location>
</feature>
<feature type="modified residue" description="Omega-N-methylarginine" evidence="8">
    <location>
        <position position="87"/>
    </location>
</feature>
<feature type="modified residue" description="Omega-N-methylarginine" evidence="8">
    <location>
        <position position="93"/>
    </location>
</feature>
<feature type="modified residue" description="N6-(2-hydroxyisobutyryl)lysine; alternate" evidence="22">
    <location>
        <position position="109"/>
    </location>
</feature>
<feature type="modified residue" description="N6-glutaryllysine; alternate" evidence="26">
    <location>
        <position position="109"/>
    </location>
</feature>
<feature type="modified residue" description="N6-lactoyllysine; alternate" evidence="27">
    <location>
        <position position="109"/>
    </location>
</feature>
<feature type="modified residue" description="N6-methyllysine; alternate" evidence="16">
    <location>
        <position position="109"/>
    </location>
</feature>
<feature type="modified residue" description="Phosphothreonine" evidence="4">
    <location>
        <position position="116"/>
    </location>
</feature>
<feature type="modified residue" description="N6-(2-hydroxyisobutyryl)lysine; alternate" evidence="22">
    <location>
        <position position="117"/>
    </location>
</feature>
<feature type="modified residue" description="N6-(beta-hydroxybutyryl)lysine; alternate" evidence="24">
    <location>
        <position position="117"/>
    </location>
</feature>
<feature type="modified residue" description="N6-glutaryllysine; alternate" evidence="26">
    <location>
        <position position="117"/>
    </location>
</feature>
<feature type="modified residue" description="N6-lactoyllysine; alternate" evidence="27">
    <location>
        <position position="117"/>
    </location>
</feature>
<feature type="modified residue" description="N6-malonyllysine; alternate" evidence="21">
    <location>
        <position position="117"/>
    </location>
</feature>
<feature type="modified residue" description="N6-methylated lysine; alternate" evidence="4">
    <location>
        <position position="117"/>
    </location>
</feature>
<feature type="modified residue" description="N6-succinyllysine; alternate" evidence="21">
    <location>
        <position position="117"/>
    </location>
</feature>
<feature type="modified residue" description="N6-(2-hydroxyisobutyryl)lysine; alternate" evidence="22">
    <location>
        <position position="121"/>
    </location>
</feature>
<feature type="modified residue" description="N6-(beta-hydroxybutyryl)lysine; alternate" evidence="24">
    <location>
        <position position="121"/>
    </location>
</feature>
<feature type="modified residue" description="N6-glutaryllysine; alternate" evidence="26">
    <location>
        <position position="121"/>
    </location>
</feature>
<feature type="modified residue" description="N6-lactoyllysine; alternate" evidence="27">
    <location>
        <position position="121"/>
    </location>
</feature>
<feature type="modified residue" description="N6-succinyllysine; alternate" evidence="21">
    <location>
        <position position="121"/>
    </location>
</feature>
<feature type="glycosylation site" description="O-linked (GlcNAc) serine" evidence="20">
    <location>
        <position position="113"/>
    </location>
</feature>
<feature type="cross-link" description="Glycyl lysine isopeptide (Lys-Gly) (interchain with G-Cter in SUMO2); alternate" evidence="3">
    <location>
        <position position="6"/>
    </location>
</feature>
<feature type="cross-link" description="Glycyl lysine isopeptide (Lys-Gly) (interchain with G-Cter in SUMO2); alternate" evidence="5">
    <location>
        <position position="21"/>
    </location>
</feature>
<feature type="cross-link" description="Glycyl lysine isopeptide (Lys-Gly) (interchain with G-Cter in ubiquitin); alternate" evidence="18">
    <location>
        <position position="35"/>
    </location>
</feature>
<feature type="cross-link" description="Glycyl lysine isopeptide (Lys-Gly) (interchain with G-Cter in ubiquitin); alternate" evidence="15 16 17 20">
    <location>
        <position position="121"/>
    </location>
</feature>
<feature type="sequence variant" id="VAR_055887" description="In dbSNP:rs7766641." evidence="32">
    <original>G</original>
    <variation>S</variation>
    <location>
        <position position="27"/>
    </location>
</feature>
<feature type="mutagenesis site" description="No effect on interaction with VRK1." evidence="29">
    <original>E</original>
    <variation>A</variation>
    <location>
        <position position="114"/>
    </location>
</feature>
<feature type="sequence conflict" description="In Ref. 2; CAB02545." evidence="33" ref="2">
    <original>A</original>
    <variation>S</variation>
    <location>
        <position position="5"/>
    </location>
</feature>
<feature type="sequence conflict" description="In Ref. 2; CAB02545." evidence="33" ref="2">
    <original>S</original>
    <variation>T</variation>
    <location>
        <position position="33"/>
    </location>
</feature>
<feature type="helix" evidence="46">
    <location>
        <begin position="39"/>
        <end position="49"/>
    </location>
</feature>
<feature type="strand" evidence="47">
    <location>
        <begin position="50"/>
        <end position="52"/>
    </location>
</feature>
<feature type="helix" evidence="46">
    <location>
        <begin position="57"/>
        <end position="84"/>
    </location>
</feature>
<feature type="strand" evidence="46">
    <location>
        <begin position="88"/>
        <end position="90"/>
    </location>
</feature>
<feature type="helix" evidence="46">
    <location>
        <begin position="92"/>
        <end position="102"/>
    </location>
</feature>
<feature type="helix" evidence="46">
    <location>
        <begin position="105"/>
        <end position="123"/>
    </location>
</feature>
<reference key="1">
    <citation type="journal article" date="1991" name="Genomics">
        <title>Isolation and characterization of two human H1 histone genes within clusters of core histone genes.</title>
        <authorList>
            <person name="Albig W."/>
            <person name="Kardalinou E."/>
            <person name="Drabent B."/>
            <person name="Zimmer A."/>
            <person name="Doenecke D."/>
        </authorList>
    </citation>
    <scope>NUCLEOTIDE SEQUENCE [GENOMIC DNA] (H2BC8)</scope>
</reference>
<reference key="2">
    <citation type="journal article" date="1997" name="Genomics">
        <title>Human histone gene organization: nonregular arrangement within a large cluster.</title>
        <authorList>
            <person name="Albig W."/>
            <person name="Kioschis P."/>
            <person name="Poustka A."/>
            <person name="Meergans K."/>
            <person name="Doenecke D."/>
        </authorList>
    </citation>
    <scope>NUCLEOTIDE SEQUENCE [GENOMIC DNA] (H2BC4; H2BC6; H2BC7 AND H2BC10)</scope>
    <scope>VARIANT SER-27</scope>
</reference>
<reference key="3">
    <citation type="journal article" date="2002" name="Genomics">
        <title>The human and mouse replication-dependent histone genes.</title>
        <authorList>
            <person name="Marzluff W.F."/>
            <person name="Gongidi P."/>
            <person name="Woods K.R."/>
            <person name="Jin J."/>
            <person name="Maltais L.J."/>
        </authorList>
    </citation>
    <scope>NUCLEOTIDE SEQUENCE [GENOMIC DNA] (H2BC4; H2BC6; H2BC7; H2BC8 AND H2BC10)</scope>
</reference>
<reference key="4">
    <citation type="journal article" date="2003" name="Nature">
        <title>The DNA sequence and analysis of human chromosome 6.</title>
        <authorList>
            <person name="Mungall A.J."/>
            <person name="Palmer S.A."/>
            <person name="Sims S.K."/>
            <person name="Edwards C.A."/>
            <person name="Ashurst J.L."/>
            <person name="Wilming L."/>
            <person name="Jones M.C."/>
            <person name="Horton R."/>
            <person name="Hunt S.E."/>
            <person name="Scott C.E."/>
            <person name="Gilbert J.G.R."/>
            <person name="Clamp M.E."/>
            <person name="Bethel G."/>
            <person name="Milne S."/>
            <person name="Ainscough R."/>
            <person name="Almeida J.P."/>
            <person name="Ambrose K.D."/>
            <person name="Andrews T.D."/>
            <person name="Ashwell R.I.S."/>
            <person name="Babbage A.K."/>
            <person name="Bagguley C.L."/>
            <person name="Bailey J."/>
            <person name="Banerjee R."/>
            <person name="Barker D.J."/>
            <person name="Barlow K.F."/>
            <person name="Bates K."/>
            <person name="Beare D.M."/>
            <person name="Beasley H."/>
            <person name="Beasley O."/>
            <person name="Bird C.P."/>
            <person name="Blakey S.E."/>
            <person name="Bray-Allen S."/>
            <person name="Brook J."/>
            <person name="Brown A.J."/>
            <person name="Brown J.Y."/>
            <person name="Burford D.C."/>
            <person name="Burrill W."/>
            <person name="Burton J."/>
            <person name="Carder C."/>
            <person name="Carter N.P."/>
            <person name="Chapman J.C."/>
            <person name="Clark S.Y."/>
            <person name="Clark G."/>
            <person name="Clee C.M."/>
            <person name="Clegg S."/>
            <person name="Cobley V."/>
            <person name="Collier R.E."/>
            <person name="Collins J.E."/>
            <person name="Colman L.K."/>
            <person name="Corby N.R."/>
            <person name="Coville G.J."/>
            <person name="Culley K.M."/>
            <person name="Dhami P."/>
            <person name="Davies J."/>
            <person name="Dunn M."/>
            <person name="Earthrowl M.E."/>
            <person name="Ellington A.E."/>
            <person name="Evans K.A."/>
            <person name="Faulkner L."/>
            <person name="Francis M.D."/>
            <person name="Frankish A."/>
            <person name="Frankland J."/>
            <person name="French L."/>
            <person name="Garner P."/>
            <person name="Garnett J."/>
            <person name="Ghori M.J."/>
            <person name="Gilby L.M."/>
            <person name="Gillson C.J."/>
            <person name="Glithero R.J."/>
            <person name="Grafham D.V."/>
            <person name="Grant M."/>
            <person name="Gribble S."/>
            <person name="Griffiths C."/>
            <person name="Griffiths M.N.D."/>
            <person name="Hall R."/>
            <person name="Halls K.S."/>
            <person name="Hammond S."/>
            <person name="Harley J.L."/>
            <person name="Hart E.A."/>
            <person name="Heath P.D."/>
            <person name="Heathcott R."/>
            <person name="Holmes S.J."/>
            <person name="Howden P.J."/>
            <person name="Howe K.L."/>
            <person name="Howell G.R."/>
            <person name="Huckle E."/>
            <person name="Humphray S.J."/>
            <person name="Humphries M.D."/>
            <person name="Hunt A.R."/>
            <person name="Johnson C.M."/>
            <person name="Joy A.A."/>
            <person name="Kay M."/>
            <person name="Keenan S.J."/>
            <person name="Kimberley A.M."/>
            <person name="King A."/>
            <person name="Laird G.K."/>
            <person name="Langford C."/>
            <person name="Lawlor S."/>
            <person name="Leongamornlert D.A."/>
            <person name="Leversha M."/>
            <person name="Lloyd C.R."/>
            <person name="Lloyd D.M."/>
            <person name="Loveland J.E."/>
            <person name="Lovell J."/>
            <person name="Martin S."/>
            <person name="Mashreghi-Mohammadi M."/>
            <person name="Maslen G.L."/>
            <person name="Matthews L."/>
            <person name="McCann O.T."/>
            <person name="McLaren S.J."/>
            <person name="McLay K."/>
            <person name="McMurray A."/>
            <person name="Moore M.J.F."/>
            <person name="Mullikin J.C."/>
            <person name="Niblett D."/>
            <person name="Nickerson T."/>
            <person name="Novik K.L."/>
            <person name="Oliver K."/>
            <person name="Overton-Larty E.K."/>
            <person name="Parker A."/>
            <person name="Patel R."/>
            <person name="Pearce A.V."/>
            <person name="Peck A.I."/>
            <person name="Phillimore B.J.C.T."/>
            <person name="Phillips S."/>
            <person name="Plumb R.W."/>
            <person name="Porter K.M."/>
            <person name="Ramsey Y."/>
            <person name="Ranby S.A."/>
            <person name="Rice C.M."/>
            <person name="Ross M.T."/>
            <person name="Searle S.M."/>
            <person name="Sehra H.K."/>
            <person name="Sheridan E."/>
            <person name="Skuce C.D."/>
            <person name="Smith S."/>
            <person name="Smith M."/>
            <person name="Spraggon L."/>
            <person name="Squares S.L."/>
            <person name="Steward C.A."/>
            <person name="Sycamore N."/>
            <person name="Tamlyn-Hall G."/>
            <person name="Tester J."/>
            <person name="Theaker A.J."/>
            <person name="Thomas D.W."/>
            <person name="Thorpe A."/>
            <person name="Tracey A."/>
            <person name="Tromans A."/>
            <person name="Tubby B."/>
            <person name="Wall M."/>
            <person name="Wallis J.M."/>
            <person name="West A.P."/>
            <person name="White S.S."/>
            <person name="Whitehead S.L."/>
            <person name="Whittaker H."/>
            <person name="Wild A."/>
            <person name="Willey D.J."/>
            <person name="Wilmer T.E."/>
            <person name="Wood J.M."/>
            <person name="Wray P.W."/>
            <person name="Wyatt J.C."/>
            <person name="Young L."/>
            <person name="Younger R.M."/>
            <person name="Bentley D.R."/>
            <person name="Coulson A."/>
            <person name="Durbin R.M."/>
            <person name="Hubbard T."/>
            <person name="Sulston J.E."/>
            <person name="Dunham I."/>
            <person name="Rogers J."/>
            <person name="Beck S."/>
        </authorList>
    </citation>
    <scope>NUCLEOTIDE SEQUENCE [LARGE SCALE GENOMIC DNA] (H2BC4; H2BC6; H2BC7; H2BC8 AND H2BC10)</scope>
</reference>
<reference key="5">
    <citation type="journal article" date="2004" name="Genome Res.">
        <title>The status, quality, and expansion of the NIH full-length cDNA project: the Mammalian Gene Collection (MGC).</title>
        <authorList>
            <consortium name="The MGC Project Team"/>
        </authorList>
    </citation>
    <scope>NUCLEOTIDE SEQUENCE [LARGE SCALE MRNA]</scope>
    <source>
        <tissue>Lung</tissue>
        <tissue>Ovary</tissue>
    </source>
</reference>
<reference key="6">
    <citation type="journal article" date="1979" name="J. Biochem.">
        <title>Human spleen histone H2B. Isolation and amino acid sequence.</title>
        <authorList>
            <person name="Ohe Y."/>
            <person name="Hayashi H."/>
            <person name="Iwai K."/>
        </authorList>
    </citation>
    <scope>PROTEIN SEQUENCE OF 2-126</scope>
    <source>
        <tissue>Spleen</tissue>
    </source>
</reference>
<reference key="7">
    <citation type="journal article" date="2002" name="J. Immunol.">
        <title>Endotoxin-neutralizing antimicrobial proteins of the human placenta.</title>
        <authorList>
            <person name="Kim H.S."/>
            <person name="Cho J.H."/>
            <person name="Park H.W."/>
            <person name="Yoon H."/>
            <person name="Kim M.S."/>
            <person name="Kim S.C."/>
        </authorList>
    </citation>
    <scope>PROTEIN SEQUENCE OF 2-21</scope>
    <scope>FUNCTION</scope>
</reference>
<reference key="8">
    <citation type="journal article" date="1996" name="Eur. J. Biochem.">
        <title>Biochemical and antibacterial analysis of human wound and blister fluid.</title>
        <authorList>
            <person name="Frohm M."/>
            <person name="Gunne H."/>
            <person name="Bergman A.-C."/>
            <person name="Agerberth B."/>
            <person name="Bergman T."/>
            <person name="Boman A."/>
            <person name="Liden S."/>
            <person name="Joernvall H."/>
            <person name="Boman H.G."/>
        </authorList>
    </citation>
    <scope>PROTEIN SEQUENCE OF 2-13</scope>
</reference>
<reference key="9">
    <citation type="journal article" date="2003" name="Peptides">
        <title>Antimicrobial peptides in the first line defence of human colon mucosa.</title>
        <authorList>
            <person name="Tollin M."/>
            <person name="Bergman P."/>
            <person name="Svenberg T."/>
            <person name="Joernvall H."/>
            <person name="Gudmundsson G.H."/>
            <person name="Agerberth B."/>
        </authorList>
    </citation>
    <scope>PROTEIN SEQUENCE OF 2-13</scope>
    <scope>FUNCTION</scope>
</reference>
<reference key="10">
    <citation type="journal article" date="2003" name="Peptides">
        <title>Antimicrobial polypeptides of the human colonic epithelium.</title>
        <authorList>
            <person name="Howell S.J."/>
            <person name="Wilk D."/>
            <person name="Yadav S.P."/>
            <person name="Bevins C.L."/>
        </authorList>
    </citation>
    <scope>PROTEIN SEQUENCE OF 2-13</scope>
    <scope>FUNCTION</scope>
</reference>
<reference key="11">
    <citation type="journal article" date="2006" name="Mol. Cell. Proteomics">
        <title>Quantitative proteomic analysis of post-translational modifications of human histones.</title>
        <authorList>
            <person name="Beck H.C."/>
            <person name="Nielsen E.C."/>
            <person name="Matthiesen R."/>
            <person name="Jensen L.H."/>
            <person name="Sehested M."/>
            <person name="Finn P."/>
            <person name="Grauslund M."/>
            <person name="Hansen A.M."/>
            <person name="Jensen O.N."/>
        </authorList>
    </citation>
    <scope>PROTEIN SEQUENCE OF 7-24</scope>
    <scope>ACETYLATION AT LYS-6; LYS-12; LYS-13; LYS-16; LYS-17 AND LYS-21</scope>
    <scope>METHYLATION AT LYS-47; LYS-58 AND LYS-109</scope>
    <scope>UBIQUITINATION AT LYS-121</scope>
    <scope>IDENTIFICATION BY MASS SPECTROMETRY</scope>
</reference>
<reference key="12">
    <citation type="journal article" date="2003" name="Cell">
        <title>Apoptotic phosphorylation of histone H2B is mediated by mammalian sterile twenty kinase.</title>
        <authorList>
            <person name="Cheung W.L."/>
            <person name="Ajiro K."/>
            <person name="Samejima K."/>
            <person name="Kloc M."/>
            <person name="Cheung P."/>
            <person name="Mizzen C.A."/>
            <person name="Beeser A."/>
            <person name="Etkin L.D."/>
            <person name="Chernoff J."/>
            <person name="Earnshaw W.C."/>
            <person name="Allis C.D."/>
        </authorList>
    </citation>
    <scope>PHOSPHORYLATION AT SER-15</scope>
</reference>
<reference key="13">
    <citation type="journal article" date="2005" name="Mol. Cell">
        <title>Monoubiquitination of human histone H2B: the factors involved and their roles in HOX gene regulation.</title>
        <authorList>
            <person name="Zhu B."/>
            <person name="Zheng Y."/>
            <person name="Pham A.-D."/>
            <person name="Mandal S.S."/>
            <person name="Erdjument-Bromage H."/>
            <person name="Tempst P."/>
            <person name="Reinberg D."/>
        </authorList>
    </citation>
    <scope>UBIQUITINATION AT LYS-121</scope>
</reference>
<reference key="14">
    <citation type="journal article" date="2005" name="Mol. Cell. Biochem.">
        <title>Inhibition of core histones acetylation by carcinogenic nickel(II).</title>
        <authorList>
            <person name="Golebiowski F."/>
            <person name="Kasprzak K.S."/>
        </authorList>
    </citation>
    <scope>ACETYLATION AT LYS-6; LYS-13; LYS-16 AND LYS-21</scope>
</reference>
<reference key="15">
    <citation type="journal article" date="2006" name="Cell">
        <title>Histone H2B monoubiquitination functions cooperatively with FACT to regulate elongation by RNA polymerase II.</title>
        <authorList>
            <person name="Pavri R."/>
            <person name="Zhu B."/>
            <person name="Li G."/>
            <person name="Trojer P."/>
            <person name="Mandal S."/>
            <person name="Shilatifard A."/>
            <person name="Reinberg D."/>
        </authorList>
    </citation>
    <scope>UBIQUITINATION AT LYS-121</scope>
</reference>
<reference key="16">
    <citation type="journal article" date="2006" name="J. Proteome Res.">
        <title>Gene-specific characterization of human histone H2B by electron capture dissociation.</title>
        <authorList>
            <person name="Siuti N."/>
            <person name="Roth M.J."/>
            <person name="Mizzen C.A."/>
            <person name="Kelleher N.L."/>
            <person name="Pesavento J.J."/>
        </authorList>
    </citation>
    <scope>IDENTIFICATION BY MASS SPECTROMETRY</scope>
</reference>
<reference key="17">
    <citation type="journal article" date="2011" name="Mol. Cell">
        <title>The RING finger protein MSL2 in the MOF complex is an E3 ubiquitin ligase for H2B K34 and is involved in crosstalk with H3 K4 and K79 methylation.</title>
        <authorList>
            <person name="Wu L."/>
            <person name="Zee B.M."/>
            <person name="Wang Y."/>
            <person name="Garcia B.A."/>
            <person name="Dou Y."/>
        </authorList>
    </citation>
    <scope>UBIQUITINATION AT LYS-35</scope>
</reference>
<reference key="18">
    <citation type="journal article" date="2011" name="Nature">
        <title>GlcNAcylation of histone H2B facilitates its monoubiquitination.</title>
        <authorList>
            <person name="Fujiki R."/>
            <person name="Hashiba W."/>
            <person name="Sekine H."/>
            <person name="Yokoyama A."/>
            <person name="Chikanishi T."/>
            <person name="Ito S."/>
            <person name="Imai Y."/>
            <person name="Kim J."/>
            <person name="He H.H."/>
            <person name="Igarashi K."/>
            <person name="Kanno J."/>
            <person name="Ohtake F."/>
            <person name="Kitagawa H."/>
            <person name="Roeder R.G."/>
            <person name="Brown M."/>
            <person name="Kato S."/>
        </authorList>
    </citation>
    <scope>GLYCOSYLATION AT SER-113</scope>
    <scope>UBIQUITINATION AT LYS-121</scope>
</reference>
<reference key="19">
    <citation type="journal article" date="2011" name="Cell">
        <title>Identification of 67 histone marks and histone lysine crotonylation as a new type of histone modification.</title>
        <authorList>
            <person name="Tan M."/>
            <person name="Luo H."/>
            <person name="Lee S."/>
            <person name="Jin F."/>
            <person name="Yang J.S."/>
            <person name="Montellier E."/>
            <person name="Buchou T."/>
            <person name="Cheng Z."/>
            <person name="Rousseaux S."/>
            <person name="Rajagopal N."/>
            <person name="Lu Z."/>
            <person name="Ye Z."/>
            <person name="Zhu Q."/>
            <person name="Wysocka J."/>
            <person name="Ye Y."/>
            <person name="Khochbin S."/>
            <person name="Ren B."/>
            <person name="Zhao Y."/>
        </authorList>
    </citation>
    <scope>CROTONYLATION AT LYS-6; LYS-12; LYS-13; LYS-16; LYS-17; LYS-21; LYS-24 AND LYS-35</scope>
</reference>
<reference key="20">
    <citation type="journal article" date="2012" name="Mol. Cell. Proteomics">
        <title>Lysine succinylation and lysine malonylation in histones.</title>
        <authorList>
            <person name="Xie Z."/>
            <person name="Dai J."/>
            <person name="Dai L."/>
            <person name="Tan M."/>
            <person name="Cheng Z."/>
            <person name="Wu Y."/>
            <person name="Boeke J.D."/>
            <person name="Zhao Y."/>
        </authorList>
    </citation>
    <scope>SUCCINYLATION AT LYS-35; LYS-117 AND LYS-121</scope>
    <scope>MALONYLATION AT LYS-117</scope>
</reference>
<reference key="21">
    <citation type="journal article" date="2013" name="Genes Dev.">
        <title>USP49 deubiquitinates histone H2B and regulates cotranscriptional pre-mRNA splicing.</title>
        <authorList>
            <person name="Zhang Z."/>
            <person name="Jones A."/>
            <person name="Joo H.Y."/>
            <person name="Zhou D."/>
            <person name="Cao Y."/>
            <person name="Chen S."/>
            <person name="Erdjument-Bromage H."/>
            <person name="Renfrow M."/>
            <person name="He H."/>
            <person name="Tempst P."/>
            <person name="Townes T.M."/>
            <person name="Giles K.E."/>
            <person name="Ma L."/>
            <person name="Wang H."/>
        </authorList>
    </citation>
    <scope>UBIQUITINATION</scope>
    <scope>DEUBIQUITINATION BY USP49</scope>
</reference>
<reference key="22">
    <citation type="journal article" date="2014" name="Nat. Chem. Biol.">
        <title>Lysine 2-hydroxyisobutyrylation is a widely distributed active histone mark.</title>
        <authorList>
            <person name="Dai L."/>
            <person name="Peng C."/>
            <person name="Montellier E."/>
            <person name="Lu Z."/>
            <person name="Chen Y."/>
            <person name="Ishii H."/>
            <person name="Debernardi A."/>
            <person name="Buchou T."/>
            <person name="Rousseaux S."/>
            <person name="Jin F."/>
            <person name="Sabari B.R."/>
            <person name="Deng Z."/>
            <person name="Allis C.D."/>
            <person name="Ren B."/>
            <person name="Khochbin S."/>
            <person name="Zhao Y."/>
        </authorList>
    </citation>
    <scope>HYDROXYBUTYRYLATION AT LYS-6; LYS-13; LYS-21; LYS-24; LYS-25; LYS-35; LYS-44; LYS-47; LYS-58; LYS-86; LYS-109; LYS-117 AND LYS-121</scope>
</reference>
<reference key="23">
    <citation type="journal article" date="2016" name="Mol. Cell">
        <title>Dynamic competing histone H4 K5K8 acetylation and butyrylation are hallmarks of highly active gene promoters.</title>
        <authorList>
            <person name="Goudarzi A."/>
            <person name="Zhang D."/>
            <person name="Huang H."/>
            <person name="Barral S."/>
            <person name="Kwon O.K."/>
            <person name="Qi S."/>
            <person name="Tang Z."/>
            <person name="Buchou T."/>
            <person name="Vitte A.L."/>
            <person name="He T."/>
            <person name="Cheng Z."/>
            <person name="Montellier E."/>
            <person name="Gaucher J."/>
            <person name="Curtet S."/>
            <person name="Debernardi A."/>
            <person name="Charbonnier G."/>
            <person name="Puthier D."/>
            <person name="Petosa C."/>
            <person name="Panne D."/>
            <person name="Rousseaux S."/>
            <person name="Roeder R.G."/>
            <person name="Zhao Y."/>
            <person name="Khochbin S."/>
        </authorList>
    </citation>
    <scope>BUTYRYLATION AT LYS-6 AND LYS-21</scope>
</reference>
<reference key="24">
    <citation type="journal article" date="2016" name="Mol. Cell">
        <title>Metabolic regulation of gene expression by histone lysine beta-hydroxybutyrylation.</title>
        <authorList>
            <person name="Xie Z."/>
            <person name="Zhang D."/>
            <person name="Chung D."/>
            <person name="Tang Z."/>
            <person name="Huang H."/>
            <person name="Dai L."/>
            <person name="Qi S."/>
            <person name="Li J."/>
            <person name="Colak G."/>
            <person name="Chen Y."/>
            <person name="Xia C."/>
            <person name="Peng C."/>
            <person name="Ruan H."/>
            <person name="Kirkey M."/>
            <person name="Wang D."/>
            <person name="Jensen L.M."/>
            <person name="Kwon O.K."/>
            <person name="Lee S."/>
            <person name="Pletcher S.D."/>
            <person name="Tan M."/>
            <person name="Lombard D.B."/>
            <person name="White K.P."/>
            <person name="Zhao H."/>
            <person name="Li J."/>
            <person name="Roeder R.G."/>
            <person name="Yang X."/>
            <person name="Zhao Y."/>
        </authorList>
    </citation>
    <scope>HYDROXYBUTYRYLATION AT LYS-6; LYS-12; LYS-17; LYS-21; LYS-35; LYS-86; LYS-117 AND LYS-121</scope>
</reference>
<reference key="25">
    <citation type="journal article" date="2016" name="Nat. Commun.">
        <title>PARP3 is a sensor of nicked nucleosomes and monoribosylates histone H2B(Glu2).</title>
        <authorList>
            <person name="Grundy G.J."/>
            <person name="Polo L.M."/>
            <person name="Zeng Z."/>
            <person name="Rulten S.L."/>
            <person name="Hoch N.C."/>
            <person name="Paomephan P."/>
            <person name="Xu Y."/>
            <person name="Sweet S.M."/>
            <person name="Thorne A.W."/>
            <person name="Oliver A.W."/>
            <person name="Matthews S.J."/>
            <person name="Pearl L.H."/>
            <person name="Caldecott K.W."/>
        </authorList>
    </citation>
    <scope>ADP-RIBOSYLATION AT GLU-3</scope>
</reference>
<reference key="26">
    <citation type="journal article" date="2019" name="Mol. Cell">
        <title>Glutarylation of histone H4 lysine 91 regulates chromatin dynamics.</title>
        <authorList>
            <person name="Bao X."/>
            <person name="Liu Z."/>
            <person name="Zhang W."/>
            <person name="Gladysz K."/>
            <person name="Fung Y.M.E."/>
            <person name="Tian G."/>
            <person name="Xiong Y."/>
            <person name="Wong J.W.H."/>
            <person name="Yuen K.W.Y."/>
            <person name="Li X.D."/>
        </authorList>
    </citation>
    <scope>GLUTARYLATION AT LYS-17; LYS-35; LYS-44; LYS-47; LYS-109; LYS-117 AND LYS-121</scope>
</reference>
<reference key="27">
    <citation type="journal article" date="2019" name="Nature">
        <title>Metabolic regulation of gene expression by histone lactylation.</title>
        <authorList>
            <person name="Zhang D."/>
            <person name="Tang Z."/>
            <person name="Huang H."/>
            <person name="Zhou G."/>
            <person name="Cui C."/>
            <person name="Weng Y."/>
            <person name="Liu W."/>
            <person name="Kim S."/>
            <person name="Lee S."/>
            <person name="Perez-Neut M."/>
            <person name="Ding J."/>
            <person name="Czyz D."/>
            <person name="Hu R."/>
            <person name="Ye Z."/>
            <person name="He M."/>
            <person name="Zheng Y.G."/>
            <person name="Shuman H.A."/>
            <person name="Dai L."/>
            <person name="Ren B."/>
            <person name="Roeder R.G."/>
            <person name="Becker L."/>
            <person name="Zhao Y."/>
        </authorList>
    </citation>
    <scope>LACTYLATION AT LYS-6; LYS-12; LYS-16; LYS-17; LYS-21; LYS-24; LYS-44; LYS-86; LYS-109; LYS-117 AND LYS-121</scope>
</reference>
<reference key="28">
    <citation type="journal article" date="2021" name="Elife">
        <title>Serine ADP-ribosylation marks nucleosomes for ALC1-dependent chromatin remodeling.</title>
        <authorList>
            <person name="Mohapatra J."/>
            <person name="Tashiro K."/>
            <person name="Beckner R.L."/>
            <person name="Sierra J."/>
            <person name="Kilgore J.A."/>
            <person name="Williams N.S."/>
            <person name="Liszczak G."/>
        </authorList>
    </citation>
    <scope>ADP-RIBOSYLATION AT SER-7</scope>
</reference>
<reference evidence="39 40 41" key="29">
    <citation type="journal article" date="2020" name="Nature">
        <title>The molecular basis of tight nuclear tethering and inactivation of cGAS.</title>
        <authorList>
            <person name="Zhao B."/>
            <person name="Xu P."/>
            <person name="Rowlett C.M."/>
            <person name="Jing T."/>
            <person name="Shinde O."/>
            <person name="Lei Y."/>
            <person name="West A.P."/>
            <person name="Liu W.R."/>
            <person name="Li P."/>
        </authorList>
    </citation>
    <scope>STRUCTURE BY ELECTRON MICROSCOPY (2.98 ANGSTROMS) OF 3-126 IN COMPLEX WITH NUCLEOSOME CORE AND CGAS</scope>
</reference>
<reference evidence="42" key="30">
    <citation type="journal article" date="2020" name="Nature">
        <title>Structural basis for sequestration and autoinhibition of cGAS by chromatin.</title>
        <authorList>
            <person name="Michalski S."/>
            <person name="de Oliveira Mann C.C."/>
            <person name="Stafford C.A."/>
            <person name="Witte G."/>
            <person name="Bartho J."/>
            <person name="Lammens K."/>
            <person name="Hornung V."/>
            <person name="Hopfner K.P."/>
        </authorList>
    </citation>
    <scope>STRUCTURE BY ELECTRON MICROSCOPY (3.11 ANGSTROMS) OF 2-126 IN COMPLEX WITH NUCLEOSOME CORE AND CGAS</scope>
</reference>
<reference evidence="43 44" key="31">
    <citation type="journal article" date="2020" name="Science">
        <title>Structural basis of nucleosome-dependent cGAS inhibition.</title>
        <authorList>
            <person name="Boyer J.A."/>
            <person name="Spangler C.J."/>
            <person name="Strauss J.D."/>
            <person name="Cesmat A.P."/>
            <person name="Liu P."/>
            <person name="McGinty R.K."/>
            <person name="Zhang Q."/>
        </authorList>
    </citation>
    <scope>STRUCTURE BY ELECTRON MICROSCOPY (3.30 ANGSTROMS) OF 2-126 IN COMPLEX WITH NUCLEOSOME CORE AND CGAS</scope>
</reference>
<reference evidence="45" key="32">
    <citation type="journal article" date="2022" name="Nucleic Acids Res.">
        <title>Multivalent DNA and nucleosome acidic patch interactions specify VRK1 mitotic localization and activity.</title>
        <authorList>
            <person name="Budziszewski G.R."/>
            <person name="Zhao Y."/>
            <person name="Spangler C.J."/>
            <person name="Kedziora K.M."/>
            <person name="Williams M.R."/>
            <person name="Azzam D.N."/>
            <person name="Skrajna A."/>
            <person name="Koyama Y."/>
            <person name="Cesmat A.P."/>
            <person name="Simmons H.C."/>
            <person name="Arteaga E.C."/>
            <person name="Strauss J.D."/>
            <person name="Kireev D."/>
            <person name="McGinty R.K."/>
        </authorList>
    </citation>
    <scope>STRUCTURE BY ELECTRON MICROSCOPY (3.00 ANGSTROMS) OF 2-126 IN COMPLEX WITH NUCLEOSOME CORE AND VRK1</scope>
    <scope>INTERACTION WITH VRK1</scope>
    <scope>MUTAGENESIS OF GLU-114</scope>
</reference>
<gene>
    <name evidence="38" type="primary">H2BC4</name>
    <name type="synonym">H2BFL</name>
    <name type="synonym">HIST1H2BC</name>
</gene>
<gene>
    <name evidence="36" type="primary">H2BC6</name>
    <name type="synonym">H2BFH</name>
    <name type="synonym">HIST1H2BE</name>
</gene>
<gene>
    <name evidence="35" type="primary">H2BC7</name>
    <name type="synonym">H2BFG</name>
    <name type="synonym">HIST1H2BF</name>
</gene>
<gene>
    <name evidence="34" type="primary">H2BC8</name>
    <name type="synonym">H2BFA</name>
    <name type="synonym">HIST1H2BG</name>
</gene>
<gene>
    <name evidence="37" type="primary">H2BC10</name>
    <name type="synonym">H2BFK</name>
    <name type="synonym">HIST1H2BI</name>
</gene>
<evidence type="ECO:0000250" key="1">
    <source>
        <dbReference type="UniProtKB" id="P23527"/>
    </source>
</evidence>
<evidence type="ECO:0000250" key="2">
    <source>
        <dbReference type="UniProtKB" id="P33778"/>
    </source>
</evidence>
<evidence type="ECO:0000250" key="3">
    <source>
        <dbReference type="UniProtKB" id="P58876"/>
    </source>
</evidence>
<evidence type="ECO:0000250" key="4">
    <source>
        <dbReference type="UniProtKB" id="Q00729"/>
    </source>
</evidence>
<evidence type="ECO:0000250" key="5">
    <source>
        <dbReference type="UniProtKB" id="Q5QNW6"/>
    </source>
</evidence>
<evidence type="ECO:0000250" key="6">
    <source>
        <dbReference type="UniProtKB" id="Q64475"/>
    </source>
</evidence>
<evidence type="ECO:0000250" key="7">
    <source>
        <dbReference type="UniProtKB" id="Q6ZWY9"/>
    </source>
</evidence>
<evidence type="ECO:0000250" key="8">
    <source>
        <dbReference type="UniProtKB" id="Q96A08"/>
    </source>
</evidence>
<evidence type="ECO:0000256" key="9">
    <source>
        <dbReference type="SAM" id="MobiDB-lite"/>
    </source>
</evidence>
<evidence type="ECO:0000269" key="10">
    <source>
    </source>
</evidence>
<evidence type="ECO:0000269" key="11">
    <source>
    </source>
</evidence>
<evidence type="ECO:0000269" key="12">
    <source>
    </source>
</evidence>
<evidence type="ECO:0000269" key="13">
    <source>
    </source>
</evidence>
<evidence type="ECO:0000269" key="14">
    <source>
    </source>
</evidence>
<evidence type="ECO:0000269" key="15">
    <source>
    </source>
</evidence>
<evidence type="ECO:0000269" key="16">
    <source>
    </source>
</evidence>
<evidence type="ECO:0000269" key="17">
    <source>
    </source>
</evidence>
<evidence type="ECO:0000269" key="18">
    <source>
    </source>
</evidence>
<evidence type="ECO:0000269" key="19">
    <source>
    </source>
</evidence>
<evidence type="ECO:0000269" key="20">
    <source>
    </source>
</evidence>
<evidence type="ECO:0000269" key="21">
    <source>
    </source>
</evidence>
<evidence type="ECO:0000269" key="22">
    <source>
    </source>
</evidence>
<evidence type="ECO:0000269" key="23">
    <source>
    </source>
</evidence>
<evidence type="ECO:0000269" key="24">
    <source>
    </source>
</evidence>
<evidence type="ECO:0000269" key="25">
    <source>
    </source>
</evidence>
<evidence type="ECO:0000269" key="26">
    <source>
    </source>
</evidence>
<evidence type="ECO:0000269" key="27">
    <source>
    </source>
</evidence>
<evidence type="ECO:0000269" key="28">
    <source>
    </source>
</evidence>
<evidence type="ECO:0000269" key="29">
    <source>
    </source>
</evidence>
<evidence type="ECO:0000269" key="30">
    <source>
    </source>
</evidence>
<evidence type="ECO:0000269" key="31">
    <source>
    </source>
</evidence>
<evidence type="ECO:0000269" key="32">
    <source>
    </source>
</evidence>
<evidence type="ECO:0000305" key="33"/>
<evidence type="ECO:0000312" key="34">
    <source>
        <dbReference type="HGNC" id="HGNC:4746"/>
    </source>
</evidence>
<evidence type="ECO:0000312" key="35">
    <source>
        <dbReference type="HGNC" id="HGNC:4752"/>
    </source>
</evidence>
<evidence type="ECO:0000312" key="36">
    <source>
        <dbReference type="HGNC" id="HGNC:4753"/>
    </source>
</evidence>
<evidence type="ECO:0000312" key="37">
    <source>
        <dbReference type="HGNC" id="HGNC:4756"/>
    </source>
</evidence>
<evidence type="ECO:0000312" key="38">
    <source>
        <dbReference type="HGNC" id="HGNC:4757"/>
    </source>
</evidence>
<evidence type="ECO:0007744" key="39">
    <source>
        <dbReference type="PDB" id="6X59"/>
    </source>
</evidence>
<evidence type="ECO:0007744" key="40">
    <source>
        <dbReference type="PDB" id="6X5A"/>
    </source>
</evidence>
<evidence type="ECO:0007744" key="41">
    <source>
        <dbReference type="PDB" id="6XJD"/>
    </source>
</evidence>
<evidence type="ECO:0007744" key="42">
    <source>
        <dbReference type="PDB" id="7A08"/>
    </source>
</evidence>
<evidence type="ECO:0007744" key="43">
    <source>
        <dbReference type="PDB" id="7JO9"/>
    </source>
</evidence>
<evidence type="ECO:0007744" key="44">
    <source>
        <dbReference type="PDB" id="7JOA"/>
    </source>
</evidence>
<evidence type="ECO:0007744" key="45">
    <source>
        <dbReference type="PDB" id="7TAN"/>
    </source>
</evidence>
<evidence type="ECO:0007829" key="46">
    <source>
        <dbReference type="PDB" id="7R5R"/>
    </source>
</evidence>
<evidence type="ECO:0007829" key="47">
    <source>
        <dbReference type="PDB" id="8JBX"/>
    </source>
</evidence>
<comment type="function">
    <text>Core component of nucleosome. Nucleosomes wrap and compact DNA into chromatin, limiting DNA accessibility to the cellular machineries which require DNA as a template. Histones thereby play a central role in transcription regulation, DNA repair, DNA replication and chromosomal stability. DNA accessibility is regulated via a complex set of post-translational modifications of histones, also called histone code, and nucleosome remodeling.</text>
</comment>
<comment type="function">
    <text>Has broad antibacterial activity. May contribute to the formation of the functional antimicrobial barrier of the colonic epithelium, and to the bactericidal activity of amniotic fluid.</text>
</comment>
<comment type="subunit">
    <text evidence="29">The nucleosome is a histone octamer containing two molecules each of H2A, H2B, H3 and H4 assembled in one H3-H4 heterotetramer and two H2A-H2B heterodimers. The octamer wraps approximately 147 bp of DNA. Interacts with VRK1; the interaction is mediated by the nucleosome acidic patch, a cluster of negatively charged residues of H2A and H2B forming a cleft within the nucleosome core (PubMed:35390161).</text>
</comment>
<comment type="interaction">
    <interactant intactId="EBI-354552">
        <id>P62807</id>
    </interactant>
    <interactant intactId="EBI-297683">
        <id>Q96CW1</id>
        <label>AP2M1</label>
    </interactant>
    <organismsDiffer>false</organismsDiffer>
    <experiments>5</experiments>
</comment>
<comment type="interaction">
    <interactant intactId="EBI-354552">
        <id>P62807</id>
    </interactant>
    <interactant intactId="EBI-354552">
        <id>P62807</id>
        <label>H2BC8</label>
    </interactant>
    <organismsDiffer>false</organismsDiffer>
    <experiments>2</experiments>
</comment>
<comment type="interaction">
    <interactant intactId="EBI-354552">
        <id>P62807</id>
    </interactant>
    <interactant intactId="EBI-396540">
        <id>Q12888</id>
        <label>TP53BP1</label>
    </interactant>
    <organismsDiffer>false</organismsDiffer>
    <experiments>6</experiments>
</comment>
<comment type="interaction">
    <interactant intactId="EBI-354552">
        <id>P62807</id>
    </interactant>
    <interactant intactId="EBI-10175039">
        <id>Q13625-3</id>
        <label>TP53BP2</label>
    </interactant>
    <organismsDiffer>false</organismsDiffer>
    <experiments>3</experiments>
</comment>
<comment type="subcellular location">
    <subcellularLocation>
        <location>Nucleus</location>
    </subcellularLocation>
    <subcellularLocation>
        <location>Chromosome</location>
    </subcellularLocation>
</comment>
<comment type="PTM">
    <text evidence="16">Monoubiquitination at Lys-35 (H2BK34Ub) by the MSL1/MSL2 dimer is required for histone H3 'Lys-4' (H3K4me) and 'Lys-79' (H3K79me) methylation and transcription activation at specific gene loci, such as HOXA9 and MEIS1 loci. Similarly, monoubiquitination at Lys-121 (H2BK120Ub) by the RNF20/40 complex gives a specific tag for epigenetic transcriptional activation and is also prerequisite for histone H3 'Lys-4' and 'Lys-79' methylation. It also functions cooperatively with the FACT dimer to stimulate elongation by RNA polymerase II. H2BK120Ub also acts as a regulator of mRNA splicing: deubiquitination by USP49 is required for efficient cotranscriptional splicing of a large set of exons.</text>
</comment>
<comment type="PTM">
    <text evidence="6 11">Phosphorylation at Ser-37 (H2BS36ph) by AMPK in response to stress promotes transcription (By similarity). Phosphorylated on Ser-15 (H2BS14ph) by STK4/MST1 during apoptosis; which facilitates apoptotic chromatin condensation (PubMed:12757711). Also phosphorylated on Ser-15 in response to DNA double strand breaks (DSBs), and in correlation with somatic hypermutation and immunoglobulin class-switch recombination.</text>
</comment>
<comment type="PTM">
    <text evidence="20">GlcNAcylation at Ser-113 promotes monoubiquitination of Lys-121. It fluctuates in response to extracellular glucose, and associates with transcribed genes.</text>
</comment>
<comment type="PTM">
    <text evidence="7 25 28">ADP-ribosylated by PARP1 or PARP2 on Ser-7 (H2BS6ADPr) in response to DNA damage (PubMed:34874266). H2BS6ADPr promotes recruitment of CHD1L (PubMed:34874266). Mono-ADP-ribosylated on Glu-3 (H2BE2ADPr) by PARP3 in response to single-strand breaks (PubMed:27530147). Poly ADP-ribosylation on Glu-36 (H2BE35ADPr) by PARP1 regulates adipogenesis: it inhibits phosphorylation at Ser-37 (H2BS36ph), thereby blocking expression of pro-adipogenetic genes (By similarity).</text>
</comment>
<comment type="PTM">
    <text evidence="19">Crotonylation (Kcr) is specifically present in male germ cells and marks testis-specific genes in post-meiotic cells, including X-linked genes that escape sex chromosome inactivation in haploid cells. Crotonylation marks active promoters and enhancers and confers resistance to transcriptional repressors. It is also associated with post-meiotically activated genes on autosomes.</text>
</comment>
<comment type="PTM">
    <text evidence="27">Lactylated in macrophages by EP300/P300 by using lactoyl-CoA directly derived from endogenous or exogenous lactate, leading to stimulates gene transcription.</text>
</comment>
<comment type="similarity">
    <text evidence="33">Belongs to the histone H2B family.</text>
</comment>
<sequence>MPEPAKSAPAPKKGSKKAVTKAQKKDGKKRKRSRKESYSVYVYKVLKQVHPDTGISSKAMGIMNSFVNDIFERIAGEASRLAHYNKRSTITSREIQTAVRLLLPGELAKHAVSEGTKAVTKYTSSK</sequence>
<proteinExistence type="evidence at protein level"/>
<organism>
    <name type="scientific">Homo sapiens</name>
    <name type="common">Human</name>
    <dbReference type="NCBI Taxonomy" id="9606"/>
    <lineage>
        <taxon>Eukaryota</taxon>
        <taxon>Metazoa</taxon>
        <taxon>Chordata</taxon>
        <taxon>Craniata</taxon>
        <taxon>Vertebrata</taxon>
        <taxon>Euteleostomi</taxon>
        <taxon>Mammalia</taxon>
        <taxon>Eutheria</taxon>
        <taxon>Euarchontoglires</taxon>
        <taxon>Primates</taxon>
        <taxon>Haplorrhini</taxon>
        <taxon>Catarrhini</taxon>
        <taxon>Hominidae</taxon>
        <taxon>Homo</taxon>
    </lineage>
</organism>
<dbReference type="EMBL" id="M60750">
    <property type="protein sequence ID" value="AAA63189.1"/>
    <property type="molecule type" value="Genomic_DNA"/>
</dbReference>
<dbReference type="EMBL" id="Z80782">
    <property type="protein sequence ID" value="CAB02544.1"/>
    <property type="molecule type" value="Genomic_DNA"/>
</dbReference>
<dbReference type="EMBL" id="Z80779">
    <property type="protein sequence ID" value="CAB02541.1"/>
    <property type="molecule type" value="Genomic_DNA"/>
</dbReference>
<dbReference type="EMBL" id="Z80780">
    <property type="protein sequence ID" value="CAB02542.1"/>
    <property type="molecule type" value="Genomic_DNA"/>
</dbReference>
<dbReference type="EMBL" id="Z80783">
    <property type="protein sequence ID" value="CAB02545.1"/>
    <property type="molecule type" value="Genomic_DNA"/>
</dbReference>
<dbReference type="EMBL" id="AF531286">
    <property type="protein sequence ID" value="AAN06686.1"/>
    <property type="molecule type" value="Genomic_DNA"/>
</dbReference>
<dbReference type="EMBL" id="AF531288">
    <property type="protein sequence ID" value="AAN06688.1"/>
    <property type="molecule type" value="Genomic_DNA"/>
</dbReference>
<dbReference type="EMBL" id="AF531289">
    <property type="protein sequence ID" value="AAN06689.1"/>
    <property type="molecule type" value="Genomic_DNA"/>
</dbReference>
<dbReference type="EMBL" id="AF531290">
    <property type="protein sequence ID" value="AAN06690.1"/>
    <property type="molecule type" value="Genomic_DNA"/>
</dbReference>
<dbReference type="EMBL" id="AF531292">
    <property type="protein sequence ID" value="AAN06692.1"/>
    <property type="molecule type" value="Genomic_DNA"/>
</dbReference>
<dbReference type="EMBL" id="AL031777">
    <property type="status" value="NOT_ANNOTATED_CDS"/>
    <property type="molecule type" value="Genomic_DNA"/>
</dbReference>
<dbReference type="EMBL" id="AL353759">
    <property type="status" value="NOT_ANNOTATED_CDS"/>
    <property type="molecule type" value="Genomic_DNA"/>
</dbReference>
<dbReference type="EMBL" id="BC001131">
    <property type="status" value="NOT_ANNOTATED_CDS"/>
    <property type="molecule type" value="mRNA"/>
</dbReference>
<dbReference type="EMBL" id="BC009612">
    <property type="status" value="NOT_ANNOTATED_CDS"/>
    <property type="molecule type" value="mRNA"/>
</dbReference>
<dbReference type="EMBL" id="BC096120">
    <property type="protein sequence ID" value="AAH96120.1"/>
    <property type="molecule type" value="mRNA"/>
</dbReference>
<dbReference type="EMBL" id="BC096122">
    <property type="protein sequence ID" value="AAH96122.1"/>
    <property type="molecule type" value="mRNA"/>
</dbReference>
<dbReference type="EMBL" id="BC096123">
    <property type="protein sequence ID" value="AAH96123.1"/>
    <property type="molecule type" value="mRNA"/>
</dbReference>
<dbReference type="EMBL" id="BC101653">
    <property type="protein sequence ID" value="AAI01654.1"/>
    <property type="molecule type" value="mRNA"/>
</dbReference>
<dbReference type="EMBL" id="BC101655">
    <property type="protein sequence ID" value="AAI01656.1"/>
    <property type="molecule type" value="mRNA"/>
</dbReference>
<dbReference type="EMBL" id="BC101748">
    <property type="protein sequence ID" value="AAI01749.1"/>
    <property type="molecule type" value="mRNA"/>
</dbReference>
<dbReference type="EMBL" id="BC101750">
    <property type="protein sequence ID" value="AAI01751.1"/>
    <property type="molecule type" value="mRNA"/>
</dbReference>
<dbReference type="EMBL" id="BC106899">
    <property type="protein sequence ID" value="AAI06900.1"/>
    <property type="molecule type" value="mRNA"/>
</dbReference>
<dbReference type="CCDS" id="CCDS4584.1"/>
<dbReference type="CCDS" id="CCDS4588.1"/>
<dbReference type="CCDS" id="CCDS4592.1"/>
<dbReference type="CCDS" id="CCDS4594.1"/>
<dbReference type="CCDS" id="CCDS4603.1"/>
<dbReference type="PIR" id="E40335">
    <property type="entry name" value="HSHUB2"/>
</dbReference>
<dbReference type="PIR" id="S65409">
    <property type="entry name" value="S65409"/>
</dbReference>
<dbReference type="RefSeq" id="NP_001368918.1">
    <property type="nucleotide sequence ID" value="NM_001381989.1"/>
</dbReference>
<dbReference type="RefSeq" id="NP_003509.1">
    <property type="nucleotide sequence ID" value="NM_003518.3"/>
</dbReference>
<dbReference type="RefSeq" id="NP_003513.1">
    <property type="nucleotide sequence ID" value="NM_003522.3"/>
</dbReference>
<dbReference type="RefSeq" id="NP_003514.2">
    <property type="nucleotide sequence ID" value="NM_003523.2"/>
</dbReference>
<dbReference type="RefSeq" id="NP_003516.1">
    <property type="nucleotide sequence ID" value="NM_003525.2"/>
</dbReference>
<dbReference type="RefSeq" id="NP_003517.2">
    <property type="nucleotide sequence ID" value="NM_003526.2"/>
</dbReference>
<dbReference type="PDB" id="5GT0">
    <property type="method" value="X-ray"/>
    <property type="resolution" value="2.82 A"/>
    <property type="chains" value="D/H=2-126"/>
</dbReference>
<dbReference type="PDB" id="5KGF">
    <property type="method" value="EM"/>
    <property type="resolution" value="4.54 A"/>
    <property type="chains" value="D/H=1-126"/>
</dbReference>
<dbReference type="PDB" id="6ACO">
    <property type="method" value="X-ray"/>
    <property type="resolution" value="1.71 A"/>
    <property type="chains" value="B=118-124"/>
</dbReference>
<dbReference type="PDB" id="6C0W">
    <property type="method" value="EM"/>
    <property type="resolution" value="4.00 A"/>
    <property type="chains" value="D/H=1-126"/>
</dbReference>
<dbReference type="PDB" id="6FML">
    <property type="method" value="EM"/>
    <property type="resolution" value="4.34 A"/>
    <property type="chains" value="P/T=2-126"/>
</dbReference>
<dbReference type="PDB" id="6R0C">
    <property type="method" value="EM"/>
    <property type="resolution" value="4.20 A"/>
    <property type="chains" value="D/H=1-126"/>
</dbReference>
<dbReference type="PDB" id="6RNY">
    <property type="method" value="EM"/>
    <property type="resolution" value="3.90 A"/>
    <property type="chains" value="D/H=1-126"/>
</dbReference>
<dbReference type="PDB" id="6SE0">
    <property type="method" value="EM"/>
    <property type="resolution" value="3.80 A"/>
    <property type="chains" value="D/H=1-126"/>
</dbReference>
<dbReference type="PDB" id="6SE6">
    <property type="method" value="EM"/>
    <property type="resolution" value="3.50 A"/>
    <property type="chains" value="D/H=1-126"/>
</dbReference>
<dbReference type="PDB" id="6SEE">
    <property type="method" value="EM"/>
    <property type="resolution" value="4.20 A"/>
    <property type="chains" value="D/H=1-126"/>
</dbReference>
<dbReference type="PDB" id="6SEF">
    <property type="method" value="EM"/>
    <property type="resolution" value="3.70 A"/>
    <property type="chains" value="D/H=1-126"/>
</dbReference>
<dbReference type="PDB" id="6SEG">
    <property type="method" value="EM"/>
    <property type="resolution" value="3.10 A"/>
    <property type="chains" value="D/H=1-126"/>
</dbReference>
<dbReference type="PDB" id="6UPK">
    <property type="method" value="EM"/>
    <property type="resolution" value="4.90 A"/>
    <property type="chains" value="D=1-126"/>
</dbReference>
<dbReference type="PDB" id="6UPL">
    <property type="method" value="EM"/>
    <property type="resolution" value="7.40 A"/>
    <property type="chains" value="D/L=1-126"/>
</dbReference>
<dbReference type="PDB" id="6X59">
    <property type="method" value="EM"/>
    <property type="resolution" value="2.98 A"/>
    <property type="chains" value="D/H=3-126"/>
</dbReference>
<dbReference type="PDB" id="6X5A">
    <property type="method" value="EM"/>
    <property type="resolution" value="4.36 A"/>
    <property type="chains" value="D/H=3-126"/>
</dbReference>
<dbReference type="PDB" id="6XJD">
    <property type="method" value="EM"/>
    <property type="resolution" value="6.80 A"/>
    <property type="chains" value="D/H=3-126"/>
</dbReference>
<dbReference type="PDB" id="7A08">
    <property type="method" value="EM"/>
    <property type="resolution" value="3.11 A"/>
    <property type="chains" value="c/g=2-126"/>
</dbReference>
<dbReference type="PDB" id="7JO9">
    <property type="method" value="EM"/>
    <property type="resolution" value="3.30 A"/>
    <property type="chains" value="D/H=2-126"/>
</dbReference>
<dbReference type="PDB" id="7JOA">
    <property type="method" value="EM"/>
    <property type="resolution" value="3.30 A"/>
    <property type="chains" value="D/H=2-126"/>
</dbReference>
<dbReference type="PDB" id="7PII">
    <property type="method" value="EM"/>
    <property type="resolution" value="2.68 A"/>
    <property type="chains" value="D/H=1-126"/>
</dbReference>
<dbReference type="PDB" id="7R5R">
    <property type="method" value="EM"/>
    <property type="resolution" value="2.44 A"/>
    <property type="chains" value="D/H=1-126"/>
</dbReference>
<dbReference type="PDB" id="7TAN">
    <property type="method" value="EM"/>
    <property type="resolution" value="3.00 A"/>
    <property type="chains" value="D/H=2-126"/>
</dbReference>
<dbReference type="PDB" id="7TRF">
    <property type="method" value="EM"/>
    <property type="resolution" value="3.70 A"/>
    <property type="chains" value="F=1-126"/>
</dbReference>
<dbReference type="PDB" id="7U46">
    <property type="method" value="EM"/>
    <property type="resolution" value="2.68 A"/>
    <property type="chains" value="D/H=1-126"/>
</dbReference>
<dbReference type="PDB" id="7U47">
    <property type="method" value="EM"/>
    <property type="resolution" value="7.50 A"/>
    <property type="chains" value="D/H/O/S=1-126"/>
</dbReference>
<dbReference type="PDB" id="7U4D">
    <property type="method" value="EM"/>
    <property type="resolution" value="8.10 A"/>
    <property type="chains" value="D/H/O/S=1-126"/>
</dbReference>
<dbReference type="PDB" id="7U50">
    <property type="method" value="EM"/>
    <property type="resolution" value="3.40 A"/>
    <property type="chains" value="D/H=2-126"/>
</dbReference>
<dbReference type="PDB" id="7U51">
    <property type="method" value="EM"/>
    <property type="resolution" value="3.10 A"/>
    <property type="chains" value="D/H=2-126"/>
</dbReference>
<dbReference type="PDB" id="7U52">
    <property type="method" value="EM"/>
    <property type="resolution" value="3.40 A"/>
    <property type="chains" value="D/H=2-126"/>
</dbReference>
<dbReference type="PDB" id="7U53">
    <property type="method" value="EM"/>
    <property type="resolution" value="4.00 A"/>
    <property type="chains" value="D/H=2-126"/>
</dbReference>
<dbReference type="PDB" id="7UV9">
    <property type="method" value="EM"/>
    <property type="resolution" value="3.20 A"/>
    <property type="chains" value="D/H=2-126"/>
</dbReference>
<dbReference type="PDB" id="7Y8R">
    <property type="method" value="EM"/>
    <property type="resolution" value="4.40 A"/>
    <property type="chains" value="D/H=2-126"/>
</dbReference>
<dbReference type="PDB" id="7YWX">
    <property type="method" value="EM"/>
    <property type="resolution" value="12.00 A"/>
    <property type="chains" value="D/V=1-126"/>
</dbReference>
<dbReference type="PDB" id="7YYH">
    <property type="method" value="EM"/>
    <property type="resolution" value="8.90 A"/>
    <property type="chains" value="D/h=1-126"/>
</dbReference>
<dbReference type="PDB" id="8ATF">
    <property type="method" value="EM"/>
    <property type="resolution" value="3.45 A"/>
    <property type="chains" value="P/T=2-126"/>
</dbReference>
<dbReference type="PDB" id="8AV6">
    <property type="method" value="EM"/>
    <property type="resolution" value="4.68 A"/>
    <property type="chains" value="P/T=2-126"/>
</dbReference>
<dbReference type="PDB" id="8JBX">
    <property type="method" value="EM"/>
    <property type="resolution" value="3.35 A"/>
    <property type="chains" value="D/H=2-126"/>
</dbReference>
<dbReference type="PDB" id="8OFF">
    <property type="method" value="EM"/>
    <property type="resolution" value="3.40 A"/>
    <property type="chains" value="Ba/Bb=1-126"/>
</dbReference>
<dbReference type="PDB" id="8OO7">
    <property type="method" value="EM"/>
    <property type="resolution" value="2.80 A"/>
    <property type="chains" value="P=2-126"/>
</dbReference>
<dbReference type="PDB" id="8OOA">
    <property type="method" value="EM"/>
    <property type="resolution" value="3.18 A"/>
    <property type="chains" value="P=2-126"/>
</dbReference>
<dbReference type="PDB" id="8OOP">
    <property type="method" value="EM"/>
    <property type="resolution" value="2.70 A"/>
    <property type="chains" value="P=2-126"/>
</dbReference>
<dbReference type="PDB" id="8OOS">
    <property type="method" value="EM"/>
    <property type="resolution" value="3.29 A"/>
    <property type="chains" value="P=2-126"/>
</dbReference>
<dbReference type="PDB" id="8OX0">
    <property type="method" value="EM"/>
    <property type="resolution" value="2.52 A"/>
    <property type="chains" value="D/H=1-126"/>
</dbReference>
<dbReference type="PDB" id="8OX1">
    <property type="method" value="EM"/>
    <property type="resolution" value="2.70 A"/>
    <property type="chains" value="D/H=1-126"/>
</dbReference>
<dbReference type="PDB" id="8QZM">
    <property type="method" value="EM"/>
    <property type="resolution" value="3.10 A"/>
    <property type="chains" value="D/H=2-126"/>
</dbReference>
<dbReference type="PDB" id="8TXV">
    <property type="method" value="EM"/>
    <property type="resolution" value="3.80 A"/>
    <property type="chains" value="D/H=1-124"/>
</dbReference>
<dbReference type="PDB" id="8TXW">
    <property type="method" value="EM"/>
    <property type="resolution" value="3.60 A"/>
    <property type="chains" value="D/H=1-124"/>
</dbReference>
<dbReference type="PDB" id="8TXX">
    <property type="method" value="EM"/>
    <property type="resolution" value="3.70 A"/>
    <property type="chains" value="D/H=1-124"/>
</dbReference>
<dbReference type="PDB" id="8U13">
    <property type="method" value="EM"/>
    <property type="resolution" value="3.80 A"/>
    <property type="chains" value="D/H=1-124"/>
</dbReference>
<dbReference type="PDB" id="8VWS">
    <property type="method" value="EM"/>
    <property type="resolution" value="3.10 A"/>
    <property type="chains" value="D/H=2-126"/>
</dbReference>
<dbReference type="PDB" id="8VWT">
    <property type="method" value="EM"/>
    <property type="resolution" value="3.30 A"/>
    <property type="chains" value="D/H=2-126"/>
</dbReference>
<dbReference type="PDB" id="8VWU">
    <property type="method" value="EM"/>
    <property type="resolution" value="3.00 A"/>
    <property type="chains" value="D/H=2-126"/>
</dbReference>
<dbReference type="PDB" id="8VWV">
    <property type="method" value="EM"/>
    <property type="resolution" value="3.60 A"/>
    <property type="chains" value="D/H=2-126"/>
</dbReference>
<dbReference type="PDB" id="8X15">
    <property type="method" value="EM"/>
    <property type="resolution" value="3.20 A"/>
    <property type="chains" value="B/F=1-126"/>
</dbReference>
<dbReference type="PDB" id="8X19">
    <property type="method" value="EM"/>
    <property type="resolution" value="3.20 A"/>
    <property type="chains" value="B/F=1-126"/>
</dbReference>
<dbReference type="PDB" id="8X1C">
    <property type="method" value="EM"/>
    <property type="resolution" value="3.20 A"/>
    <property type="chains" value="B/F=1-126"/>
</dbReference>
<dbReference type="PDB" id="9DWF">
    <property type="method" value="EM"/>
    <property type="resolution" value="3.10 A"/>
    <property type="chains" value="D/H=2-126"/>
</dbReference>
<dbReference type="PDB" id="9DWG">
    <property type="method" value="EM"/>
    <property type="resolution" value="3.30 A"/>
    <property type="chains" value="D/H=2-126"/>
</dbReference>
<dbReference type="PDB" id="9DWH">
    <property type="method" value="EM"/>
    <property type="resolution" value="3.30 A"/>
    <property type="chains" value="D/H=2-126"/>
</dbReference>
<dbReference type="PDB" id="9DWI">
    <property type="method" value="EM"/>
    <property type="resolution" value="3.30 A"/>
    <property type="chains" value="D/H=2-126"/>
</dbReference>
<dbReference type="PDB" id="9DWJ">
    <property type="method" value="EM"/>
    <property type="resolution" value="3.40 A"/>
    <property type="chains" value="D/H=2-126"/>
</dbReference>
<dbReference type="PDB" id="9DWK">
    <property type="method" value="EM"/>
    <property type="resolution" value="4.30 A"/>
    <property type="chains" value="D/H=2-126"/>
</dbReference>
<dbReference type="PDB" id="9DWL">
    <property type="method" value="EM"/>
    <property type="resolution" value="3.90 A"/>
    <property type="chains" value="D/H=2-126"/>
</dbReference>
<dbReference type="PDB" id="9DWM">
    <property type="method" value="EM"/>
    <property type="resolution" value="4.20 A"/>
    <property type="chains" value="D/H=2-126"/>
</dbReference>
<dbReference type="PDB" id="9EOZ">
    <property type="method" value="EM"/>
    <property type="resolution" value="3.10 A"/>
    <property type="chains" value="H/M=2-126"/>
</dbReference>
<dbReference type="PDBsum" id="5GT0"/>
<dbReference type="PDBsum" id="5KGF"/>
<dbReference type="PDBsum" id="6ACO"/>
<dbReference type="PDBsum" id="6C0W"/>
<dbReference type="PDBsum" id="6FML"/>
<dbReference type="PDBsum" id="6R0C"/>
<dbReference type="PDBsum" id="6RNY"/>
<dbReference type="PDBsum" id="6SE0"/>
<dbReference type="PDBsum" id="6SE6"/>
<dbReference type="PDBsum" id="6SEE"/>
<dbReference type="PDBsum" id="6SEF"/>
<dbReference type="PDBsum" id="6SEG"/>
<dbReference type="PDBsum" id="6UPK"/>
<dbReference type="PDBsum" id="6UPL"/>
<dbReference type="PDBsum" id="6X59"/>
<dbReference type="PDBsum" id="6X5A"/>
<dbReference type="PDBsum" id="6XJD"/>
<dbReference type="PDBsum" id="7A08"/>
<dbReference type="PDBsum" id="7JO9"/>
<dbReference type="PDBsum" id="7JOA"/>
<dbReference type="PDBsum" id="7PII"/>
<dbReference type="PDBsum" id="7R5R"/>
<dbReference type="PDBsum" id="7TAN"/>
<dbReference type="PDBsum" id="7TRF"/>
<dbReference type="PDBsum" id="7U46"/>
<dbReference type="PDBsum" id="7U47"/>
<dbReference type="PDBsum" id="7U4D"/>
<dbReference type="PDBsum" id="7U50"/>
<dbReference type="PDBsum" id="7U51"/>
<dbReference type="PDBsum" id="7U52"/>
<dbReference type="PDBsum" id="7U53"/>
<dbReference type="PDBsum" id="7UV9"/>
<dbReference type="PDBsum" id="7Y8R"/>
<dbReference type="PDBsum" id="7YWX"/>
<dbReference type="PDBsum" id="7YYH"/>
<dbReference type="PDBsum" id="8ATF"/>
<dbReference type="PDBsum" id="8AV6"/>
<dbReference type="PDBsum" id="8JBX"/>
<dbReference type="PDBsum" id="8OFF"/>
<dbReference type="PDBsum" id="8OO7"/>
<dbReference type="PDBsum" id="8OOA"/>
<dbReference type="PDBsum" id="8OOP"/>
<dbReference type="PDBsum" id="8OOS"/>
<dbReference type="PDBsum" id="8OX0"/>
<dbReference type="PDBsum" id="8OX1"/>
<dbReference type="PDBsum" id="8QZM"/>
<dbReference type="PDBsum" id="8TXV"/>
<dbReference type="PDBsum" id="8TXW"/>
<dbReference type="PDBsum" id="8TXX"/>
<dbReference type="PDBsum" id="8U13"/>
<dbReference type="PDBsum" id="8VWS"/>
<dbReference type="PDBsum" id="8VWT"/>
<dbReference type="PDBsum" id="8VWU"/>
<dbReference type="PDBsum" id="8VWV"/>
<dbReference type="PDBsum" id="8X15"/>
<dbReference type="PDBsum" id="8X19"/>
<dbReference type="PDBsum" id="8X1C"/>
<dbReference type="PDBsum" id="9DWF"/>
<dbReference type="PDBsum" id="9DWG"/>
<dbReference type="PDBsum" id="9DWH"/>
<dbReference type="PDBsum" id="9DWI"/>
<dbReference type="PDBsum" id="9DWJ"/>
<dbReference type="PDBsum" id="9DWK"/>
<dbReference type="PDBsum" id="9DWL"/>
<dbReference type="PDBsum" id="9DWM"/>
<dbReference type="PDBsum" id="9EOZ"/>
<dbReference type="EMDB" id="EMD-10151"/>
<dbReference type="EMDB" id="EMD-10152"/>
<dbReference type="EMDB" id="EMD-10153"/>
<dbReference type="EMDB" id="EMD-10154"/>
<dbReference type="EMDB" id="EMD-10155"/>
<dbReference type="EMDB" id="EMD-11601"/>
<dbReference type="EMDB" id="EMD-13437"/>
<dbReference type="EMDB" id="EMD-14334"/>
<dbReference type="EMDB" id="EMD-14351"/>
<dbReference type="EMDB" id="EMD-14375"/>
<dbReference type="EMDB" id="EMD-15647"/>
<dbReference type="EMDB" id="EMD-16859"/>
<dbReference type="EMDB" id="EMD-17006"/>
<dbReference type="EMDB" id="EMD-17008"/>
<dbReference type="EMDB" id="EMD-17025"/>
<dbReference type="EMDB" id="EMD-17027"/>
<dbReference type="EMDB" id="EMD-17251"/>
<dbReference type="EMDB" id="EMD-17252"/>
<dbReference type="EMDB" id="EMD-17253"/>
<dbReference type="EMDB" id="EMD-18699"/>
<dbReference type="EMDB" id="EMD-18714"/>
<dbReference type="EMDB" id="EMD-18739"/>
<dbReference type="EMDB" id="EMD-18740"/>
<dbReference type="EMDB" id="EMD-18745"/>
<dbReference type="EMDB" id="EMD-18753"/>
<dbReference type="EMDB" id="EMD-18763"/>
<dbReference type="EMDB" id="EMD-18768"/>
<dbReference type="EMDB" id="EMD-18775"/>
<dbReference type="EMDB" id="EMD-18776"/>
<dbReference type="EMDB" id="EMD-18778"/>
<dbReference type="EMDB" id="EMD-18793"/>
<dbReference type="EMDB" id="EMD-19870"/>
<dbReference type="EMDB" id="EMD-20840"/>
<dbReference type="EMDB" id="EMD-20841"/>
<dbReference type="EMDB" id="EMD-22046"/>
<dbReference type="EMDB" id="EMD-22047"/>
<dbReference type="EMDB" id="EMD-22206"/>
<dbReference type="EMDB" id="EMD-22408"/>
<dbReference type="EMDB" id="EMD-22409"/>
<dbReference type="EMDB" id="EMD-25777"/>
<dbReference type="EMDB" id="EMD-25778"/>
<dbReference type="EMDB" id="EMD-26088"/>
<dbReference type="EMDB" id="EMD-26330"/>
<dbReference type="EMDB" id="EMD-26331"/>
<dbReference type="EMDB" id="EMD-26332"/>
<dbReference type="EMDB" id="EMD-26336"/>
<dbReference type="EMDB" id="EMD-26337"/>
<dbReference type="EMDB" id="EMD-26338"/>
<dbReference type="EMDB" id="EMD-26339"/>
<dbReference type="EMDB" id="EMD-26809"/>
<dbReference type="EMDB" id="EMD-26810"/>
<dbReference type="EMDB" id="EMD-36148"/>
<dbReference type="EMDB" id="EMD-37984"/>
<dbReference type="EMDB" id="EMD-37988"/>
<dbReference type="EMDB" id="EMD-37990"/>
<dbReference type="EMDB" id="EMD-41706"/>
<dbReference type="EMDB" id="EMD-41707"/>
<dbReference type="EMDB" id="EMD-41708"/>
<dbReference type="EMDB" id="EMD-41800"/>
<dbReference type="EMDB" id="EMD-4277"/>
<dbReference type="EMDB" id="EMD-43595"/>
<dbReference type="EMDB" id="EMD-43596"/>
<dbReference type="EMDB" id="EMD-43600"/>
<dbReference type="EMDB" id="EMD-43601"/>
<dbReference type="EMDB" id="EMD-4692"/>
<dbReference type="EMDB" id="EMD-47242"/>
<dbReference type="EMDB" id="EMD-47243"/>
<dbReference type="EMDB" id="EMD-47246"/>
<dbReference type="EMDB" id="EMD-47249"/>
<dbReference type="EMDB" id="EMD-47252"/>
<dbReference type="EMDB" id="EMD-47253"/>
<dbReference type="EMDB" id="EMD-47254"/>
<dbReference type="EMDB" id="EMD-47255"/>
<dbReference type="EMDB" id="EMD-4960"/>
<dbReference type="EMDB" id="EMD-7326"/>
<dbReference type="EMDB" id="EMD-8246"/>
<dbReference type="SASBDB" id="P62807"/>
<dbReference type="SMR" id="P62807"/>
<dbReference type="BioGRID" id="109270">
    <property type="interactions" value="336"/>
</dbReference>
<dbReference type="BioGRID" id="113935">
    <property type="interactions" value="589"/>
</dbReference>
<dbReference type="BioGRID" id="113939">
    <property type="interactions" value="251"/>
</dbReference>
<dbReference type="BioGRID" id="113940">
    <property type="interactions" value="83"/>
</dbReference>
<dbReference type="BioGRID" id="113942">
    <property type="interactions" value="133"/>
</dbReference>
<dbReference type="BioGRID" id="113943">
    <property type="interactions" value="263"/>
</dbReference>
<dbReference type="ComplexPortal" id="CPX-25755">
    <property type="entry name" value="Hexasome complex"/>
</dbReference>
<dbReference type="CORUM" id="P62807"/>
<dbReference type="DIP" id="DIP-32890N"/>
<dbReference type="FunCoup" id="P62807">
    <property type="interactions" value="1708"/>
</dbReference>
<dbReference type="IntAct" id="P62807">
    <property type="interactions" value="259"/>
</dbReference>
<dbReference type="MINT" id="P62807"/>
<dbReference type="STRING" id="9606.ENSP00000321744"/>
<dbReference type="DrugBank" id="DB09130">
    <property type="generic name" value="Copper"/>
</dbReference>
<dbReference type="GlyCosmos" id="P62807">
    <property type="glycosylation" value="1 site, No reported glycans"/>
</dbReference>
<dbReference type="GlyGen" id="P62807">
    <property type="glycosylation" value="1 site, 1 O-linked glycan (1 site)"/>
</dbReference>
<dbReference type="iPTMnet" id="P62807"/>
<dbReference type="PhosphoSitePlus" id="P62807"/>
<dbReference type="SwissPalm" id="P62807"/>
<dbReference type="BioMuta" id="HIST1H2BG"/>
<dbReference type="DMDM" id="290457686"/>
<dbReference type="jPOST" id="P62807"/>
<dbReference type="MassIVE" id="P62807"/>
<dbReference type="PaxDb" id="9606-ENSP00000321744"/>
<dbReference type="PeptideAtlas" id="P62807"/>
<dbReference type="PRIDE" id="P62807"/>
<dbReference type="Pumba" id="P62807"/>
<dbReference type="TopDownProteomics" id="P62807"/>
<dbReference type="ABCD" id="P62807">
    <property type="antibodies" value="1 sequenced antibody"/>
</dbReference>
<dbReference type="Antibodypedia" id="10912">
    <property type="antibodies" value="229 antibodies from 25 providers"/>
</dbReference>
<dbReference type="Antibodypedia" id="72347">
    <property type="antibodies" value="42 antibodies from 3 providers"/>
</dbReference>
<dbReference type="Antibodypedia" id="76967">
    <property type="antibodies" value="1 antibodies from 1 providers"/>
</dbReference>
<dbReference type="Antibodypedia" id="77815">
    <property type="antibodies" value="2 antibodies from 1 providers"/>
</dbReference>
<dbReference type="Antibodypedia" id="77855">
    <property type="antibodies" value="1 antibodies from 1 providers"/>
</dbReference>
<dbReference type="DNASU" id="8339"/>
<dbReference type="Ensembl" id="ENST00000314332.5">
    <property type="protein sequence ID" value="ENSP00000321744.4"/>
    <property type="gene ID" value="ENSG00000180596.9"/>
</dbReference>
<dbReference type="Ensembl" id="ENST00000356530.6">
    <property type="protein sequence ID" value="ENSP00000348924.3"/>
    <property type="gene ID" value="ENSG00000277224.3"/>
</dbReference>
<dbReference type="Ensembl" id="ENST00000377733.4">
    <property type="protein sequence ID" value="ENSP00000366962.3"/>
    <property type="gene ID" value="ENSG00000278588.2"/>
</dbReference>
<dbReference type="Ensembl" id="ENST00000396984.2">
    <property type="protein sequence ID" value="ENSP00000380180.1"/>
    <property type="gene ID" value="ENSG00000180596.9"/>
</dbReference>
<dbReference type="Ensembl" id="ENST00000541790.4">
    <property type="protein sequence ID" value="ENSP00000445633.2"/>
    <property type="gene ID" value="ENSG00000273802.3"/>
</dbReference>
<dbReference type="Ensembl" id="ENST00000614097.3">
    <property type="protein sequence ID" value="ENSP00000483237.2"/>
    <property type="gene ID" value="ENSG00000274290.3"/>
</dbReference>
<dbReference type="Ensembl" id="ENST00000634910.1">
    <property type="protein sequence ID" value="ENSP00000489317.1"/>
    <property type="gene ID" value="ENSG00000274290.3"/>
</dbReference>
<dbReference type="Ensembl" id="ENST00000707188.1">
    <property type="protein sequence ID" value="ENSP00000516775.1"/>
    <property type="gene ID" value="ENSG00000180596.9"/>
</dbReference>
<dbReference type="GeneID" id="3017"/>
<dbReference type="GeneID" id="8339"/>
<dbReference type="GeneID" id="8343"/>
<dbReference type="GeneID" id="8344"/>
<dbReference type="GeneID" id="8346"/>
<dbReference type="GeneID" id="8347"/>
<dbReference type="KEGG" id="hsa:3017"/>
<dbReference type="KEGG" id="hsa:8339"/>
<dbReference type="KEGG" id="hsa:8343"/>
<dbReference type="KEGG" id="hsa:8344"/>
<dbReference type="KEGG" id="hsa:8346"/>
<dbReference type="KEGG" id="hsa:8347"/>
<dbReference type="MANE-Select" id="ENST00000356530.6">
    <property type="protein sequence ID" value="ENSP00000348924.3"/>
    <property type="RefSeq nucleotide sequence ID" value="NM_003522.4"/>
    <property type="RefSeq protein sequence ID" value="NP_003513.1"/>
</dbReference>
<dbReference type="MANE-Select" id="ENST00000377733.4">
    <property type="protein sequence ID" value="ENSP00000366962.3"/>
    <property type="RefSeq nucleotide sequence ID" value="NM_003525.3"/>
    <property type="RefSeq protein sequence ID" value="NP_003516.1"/>
</dbReference>
<dbReference type="MANE-Select" id="ENST00000396984.2">
    <property type="protein sequence ID" value="ENSP00000380180.1"/>
    <property type="RefSeq nucleotide sequence ID" value="NM_003526.3"/>
    <property type="RefSeq protein sequence ID" value="NP_003517.2"/>
</dbReference>
<dbReference type="MANE-Select" id="ENST00000541790.4">
    <property type="protein sequence ID" value="ENSP00000445633.2"/>
    <property type="RefSeq nucleotide sequence ID" value="NM_003518.4"/>
    <property type="RefSeq protein sequence ID" value="NP_003509.1"/>
</dbReference>
<dbReference type="MANE-Select" id="ENST00000614097.3">
    <property type="protein sequence ID" value="ENSP00000483237.2"/>
    <property type="RefSeq nucleotide sequence ID" value="NM_003523.3"/>
    <property type="RefSeq protein sequence ID" value="NP_003514.2"/>
</dbReference>
<dbReference type="UCSC" id="uc003ngk.5">
    <property type="organism name" value="human"/>
</dbReference>
<dbReference type="AGR" id="HGNC:4746"/>
<dbReference type="AGR" id="HGNC:4747"/>
<dbReference type="AGR" id="HGNC:4752"/>
<dbReference type="AGR" id="HGNC:4753"/>
<dbReference type="AGR" id="HGNC:4756"/>
<dbReference type="AGR" id="HGNC:4757"/>
<dbReference type="CTD" id="3017"/>
<dbReference type="CTD" id="8339"/>
<dbReference type="CTD" id="8343"/>
<dbReference type="CTD" id="8344"/>
<dbReference type="CTD" id="8346"/>
<dbReference type="CTD" id="8347"/>
<dbReference type="DisGeNET" id="3017"/>
<dbReference type="DisGeNET" id="8339"/>
<dbReference type="DisGeNET" id="8343"/>
<dbReference type="DisGeNET" id="8344"/>
<dbReference type="DisGeNET" id="8346"/>
<dbReference type="DisGeNET" id="8347"/>
<dbReference type="GeneCards" id="H2BC10"/>
<dbReference type="GeneCards" id="H2BC4"/>
<dbReference type="GeneCards" id="H2BC6"/>
<dbReference type="GeneCards" id="H2BC7"/>
<dbReference type="GeneCards" id="H2BC8"/>
<dbReference type="HGNC" id="HGNC:4756">
    <property type="gene designation" value="H2BC10"/>
</dbReference>
<dbReference type="HGNC" id="HGNC:4757">
    <property type="gene designation" value="H2BC4"/>
</dbReference>
<dbReference type="HGNC" id="HGNC:4753">
    <property type="gene designation" value="H2BC6"/>
</dbReference>
<dbReference type="HGNC" id="HGNC:4752">
    <property type="gene designation" value="H2BC7"/>
</dbReference>
<dbReference type="HGNC" id="HGNC:4746">
    <property type="gene designation" value="H2BC8"/>
</dbReference>
<dbReference type="HPA" id="ENSG00000180596">
    <property type="expression patterns" value="Low tissue specificity"/>
</dbReference>
<dbReference type="HPA" id="ENSG00000273802">
    <property type="expression patterns" value="Tissue enhanced (breast)"/>
</dbReference>
<dbReference type="HPA" id="ENSG00000274290">
    <property type="expression patterns" value="Low tissue specificity"/>
</dbReference>
<dbReference type="HPA" id="ENSG00000277224">
    <property type="expression patterns" value="Tissue enhanced (esophagus, prostate)"/>
</dbReference>
<dbReference type="HPA" id="ENSG00000278588">
    <property type="expression patterns" value="Group enriched (bone marrow, choroid plexus, lymphoid tissue)"/>
</dbReference>
<dbReference type="MalaCards" id="H2BC4"/>
<dbReference type="MIM" id="602798">
    <property type="type" value="gene"/>
</dbReference>
<dbReference type="MIM" id="602804">
    <property type="type" value="gene"/>
</dbReference>
<dbReference type="MIM" id="602805">
    <property type="type" value="gene"/>
</dbReference>
<dbReference type="MIM" id="602807">
    <property type="type" value="gene"/>
</dbReference>
<dbReference type="MIM" id="602847">
    <property type="type" value="gene"/>
</dbReference>
<dbReference type="neXtProt" id="NX_P62807"/>
<dbReference type="OpenTargets" id="ENSG00000180596"/>
<dbReference type="OpenTargets" id="ENSG00000273802"/>
<dbReference type="OpenTargets" id="ENSG00000274290"/>
<dbReference type="OpenTargets" id="ENSG00000277224"/>
<dbReference type="OpenTargets" id="ENSG00000278588"/>
<dbReference type="VEuPathDB" id="HostDB:ENSG00000180596"/>
<dbReference type="VEuPathDB" id="HostDB:ENSG00000273802"/>
<dbReference type="VEuPathDB" id="HostDB:ENSG00000274290"/>
<dbReference type="VEuPathDB" id="HostDB:ENSG00000277224"/>
<dbReference type="VEuPathDB" id="HostDB:ENSG00000278588"/>
<dbReference type="eggNOG" id="KOG1744">
    <property type="taxonomic scope" value="Eukaryota"/>
</dbReference>
<dbReference type="GeneTree" id="ENSGT01110000267152"/>
<dbReference type="HOGENOM" id="CLU_075666_2_1_1"/>
<dbReference type="InParanoid" id="P62807"/>
<dbReference type="OMA" id="LIEPILW"/>
<dbReference type="OrthoDB" id="9537006at2759"/>
<dbReference type="PAN-GO" id="P62807">
    <property type="GO annotations" value="2 GO annotations based on evolutionary models"/>
</dbReference>
<dbReference type="PhylomeDB" id="P62807"/>
<dbReference type="TreeFam" id="TF300212"/>
<dbReference type="PathwayCommons" id="P62807"/>
<dbReference type="Reactome" id="R-HSA-110328">
    <property type="pathway name" value="Recognition and association of DNA glycosylase with site containing an affected pyrimidine"/>
</dbReference>
<dbReference type="Reactome" id="R-HSA-110329">
    <property type="pathway name" value="Cleavage of the damaged pyrimidine"/>
</dbReference>
<dbReference type="Reactome" id="R-HSA-110330">
    <property type="pathway name" value="Recognition and association of DNA glycosylase with site containing an affected purine"/>
</dbReference>
<dbReference type="Reactome" id="R-HSA-110331">
    <property type="pathway name" value="Cleavage of the damaged purine"/>
</dbReference>
<dbReference type="Reactome" id="R-HSA-1221632">
    <property type="pathway name" value="Meiotic synapsis"/>
</dbReference>
<dbReference type="Reactome" id="R-HSA-171306">
    <property type="pathway name" value="Packaging Of Telomere Ends"/>
</dbReference>
<dbReference type="Reactome" id="R-HSA-1912408">
    <property type="pathway name" value="Pre-NOTCH Transcription and Translation"/>
</dbReference>
<dbReference type="Reactome" id="R-HSA-201722">
    <property type="pathway name" value="Formation of the beta-catenin:TCF transactivating complex"/>
</dbReference>
<dbReference type="Reactome" id="R-HSA-212300">
    <property type="pathway name" value="PRC2 methylates histones and DNA"/>
</dbReference>
<dbReference type="Reactome" id="R-HSA-2299718">
    <property type="pathway name" value="Condensation of Prophase Chromosomes"/>
</dbReference>
<dbReference type="Reactome" id="R-HSA-2559580">
    <property type="pathway name" value="Oxidative Stress Induced Senescence"/>
</dbReference>
<dbReference type="Reactome" id="R-HSA-2559582">
    <property type="pathway name" value="Senescence-Associated Secretory Phenotype (SASP)"/>
</dbReference>
<dbReference type="Reactome" id="R-HSA-2559586">
    <property type="pathway name" value="DNA Damage/Telomere Stress Induced Senescence"/>
</dbReference>
<dbReference type="Reactome" id="R-HSA-3214815">
    <property type="pathway name" value="HDACs deacetylate histones"/>
</dbReference>
<dbReference type="Reactome" id="R-HSA-3214847">
    <property type="pathway name" value="HATs acetylate histones"/>
</dbReference>
<dbReference type="Reactome" id="R-HSA-427359">
    <property type="pathway name" value="SIRT1 negatively regulates rRNA expression"/>
</dbReference>
<dbReference type="Reactome" id="R-HSA-427389">
    <property type="pathway name" value="ERCC6 (CSB) and EHMT2 (G9a) positively regulate rRNA expression"/>
</dbReference>
<dbReference type="Reactome" id="R-HSA-427413">
    <property type="pathway name" value="NoRC negatively regulates rRNA expression"/>
</dbReference>
<dbReference type="Reactome" id="R-HSA-5250924">
    <property type="pathway name" value="B-WICH complex positively regulates rRNA expression"/>
</dbReference>
<dbReference type="Reactome" id="R-HSA-5334118">
    <property type="pathway name" value="DNA methylation"/>
</dbReference>
<dbReference type="Reactome" id="R-HSA-5578749">
    <property type="pathway name" value="Transcriptional regulation by small RNAs"/>
</dbReference>
<dbReference type="Reactome" id="R-HSA-5617472">
    <property type="pathway name" value="Activation of anterior HOX genes in hindbrain development during early embryogenesis"/>
</dbReference>
<dbReference type="Reactome" id="R-HSA-5625886">
    <property type="pathway name" value="Activated PKN1 stimulates transcription of AR (androgen receptor) regulated genes KLK2 and KLK3"/>
</dbReference>
<dbReference type="Reactome" id="R-HSA-5689880">
    <property type="pathway name" value="Ub-specific processing proteases"/>
</dbReference>
<dbReference type="Reactome" id="R-HSA-5693565">
    <property type="pathway name" value="Recruitment and ATM-mediated phosphorylation of repair and signaling proteins at DNA double strand breaks"/>
</dbReference>
<dbReference type="Reactome" id="R-HSA-5693571">
    <property type="pathway name" value="Nonhomologous End-Joining (NHEJ)"/>
</dbReference>
<dbReference type="Reactome" id="R-HSA-5693607">
    <property type="pathway name" value="Processing of DNA double-strand break ends"/>
</dbReference>
<dbReference type="Reactome" id="R-HSA-606279">
    <property type="pathway name" value="Deposition of new CENPA-containing nucleosomes at the centromere"/>
</dbReference>
<dbReference type="Reactome" id="R-HSA-68616">
    <property type="pathway name" value="Assembly of the ORC complex at the origin of replication"/>
</dbReference>
<dbReference type="Reactome" id="R-HSA-69473">
    <property type="pathway name" value="G2/M DNA damage checkpoint"/>
</dbReference>
<dbReference type="Reactome" id="R-HSA-73728">
    <property type="pathway name" value="RNA Polymerase I Promoter Opening"/>
</dbReference>
<dbReference type="Reactome" id="R-HSA-73772">
    <property type="pathway name" value="RNA Polymerase I Promoter Escape"/>
</dbReference>
<dbReference type="Reactome" id="R-HSA-8866654">
    <property type="pathway name" value="E3 ubiquitin ligases ubiquitinate target proteins"/>
</dbReference>
<dbReference type="Reactome" id="R-HSA-8936459">
    <property type="pathway name" value="RUNX1 regulates genes involved in megakaryocyte differentiation and platelet function"/>
</dbReference>
<dbReference type="Reactome" id="R-HSA-8939236">
    <property type="pathway name" value="RUNX1 regulates transcription of genes involved in differentiation of HSCs"/>
</dbReference>
<dbReference type="Reactome" id="R-HSA-9018519">
    <property type="pathway name" value="Estrogen-dependent gene expression"/>
</dbReference>
<dbReference type="Reactome" id="R-HSA-912446">
    <property type="pathway name" value="Meiotic recombination"/>
</dbReference>
<dbReference type="Reactome" id="R-HSA-9609690">
    <property type="pathway name" value="HCMV Early Events"/>
</dbReference>
<dbReference type="Reactome" id="R-HSA-9610379">
    <property type="pathway name" value="HCMV Late Events"/>
</dbReference>
<dbReference type="Reactome" id="R-HSA-9616222">
    <property type="pathway name" value="Transcriptional regulation of granulopoiesis"/>
</dbReference>
<dbReference type="Reactome" id="R-HSA-9670095">
    <property type="pathway name" value="Inhibition of DNA recombination at telomere"/>
</dbReference>
<dbReference type="Reactome" id="R-HSA-9710421">
    <property type="pathway name" value="Defective pyroptosis"/>
</dbReference>
<dbReference type="Reactome" id="R-HSA-977225">
    <property type="pathway name" value="Amyloid fiber formation"/>
</dbReference>
<dbReference type="Reactome" id="R-HSA-9821002">
    <property type="pathway name" value="Chromatin modifications during the maternal to zygotic transition (MZT)"/>
</dbReference>
<dbReference type="Reactome" id="R-HSA-9821993">
    <property type="pathway name" value="Replacement of protamines by nucleosomes in the male pronucleus"/>
</dbReference>
<dbReference type="Reactome" id="R-HSA-9841922">
    <property type="pathway name" value="MLL4 and MLL3 complexes regulate expression of PPARG target genes in adipogenesis and hepatic steatosis"/>
</dbReference>
<dbReference type="Reactome" id="R-HSA-9843940">
    <property type="pathway name" value="Regulation of endogenous retroelements by KRAB-ZFP proteins"/>
</dbReference>
<dbReference type="Reactome" id="R-HSA-9843970">
    <property type="pathway name" value="Regulation of endogenous retroelements by the Human Silencing Hub (HUSH) complex"/>
</dbReference>
<dbReference type="Reactome" id="R-HSA-9845323">
    <property type="pathway name" value="Regulation of endogenous retroelements by Piwi-interacting RNAs (piRNAs)"/>
</dbReference>
<dbReference type="SignaLink" id="P62807"/>
<dbReference type="SIGNOR" id="P62807"/>
<dbReference type="BioGRID-ORCS" id="3017">
    <property type="hits" value="141 hits in 1098 CRISPR screens"/>
</dbReference>
<dbReference type="BioGRID-ORCS" id="8339">
    <property type="hits" value="255 hits in 1040 CRISPR screens"/>
</dbReference>
<dbReference type="BioGRID-ORCS" id="8343">
    <property type="hits" value="394 hits in 1061 CRISPR screens"/>
</dbReference>
<dbReference type="BioGRID-ORCS" id="8344">
    <property type="hits" value="583 hits in 1069 CRISPR screens"/>
</dbReference>
<dbReference type="BioGRID-ORCS" id="8346">
    <property type="hits" value="79 hits in 1055 CRISPR screens"/>
</dbReference>
<dbReference type="BioGRID-ORCS" id="8347">
    <property type="hits" value="717 hits in 1087 CRISPR screens"/>
</dbReference>
<dbReference type="CD-CODE" id="91857CE7">
    <property type="entry name" value="Nucleolus"/>
</dbReference>
<dbReference type="ChiTaRS" id="HIST1H2BC">
    <property type="organism name" value="human"/>
</dbReference>
<dbReference type="ChiTaRS" id="HIST1H2BE">
    <property type="organism name" value="human"/>
</dbReference>
<dbReference type="ChiTaRS" id="HIST1H2BG">
    <property type="organism name" value="human"/>
</dbReference>
<dbReference type="GeneWiki" id="HIST1H2BE"/>
<dbReference type="GeneWiki" id="HIST1H2BF"/>
<dbReference type="GeneWiki" id="HIST1H2BG"/>
<dbReference type="GeneWiki" id="HIST1H2BI"/>
<dbReference type="GeneWiki" id="Histone_H2B_type_1-C"/>
<dbReference type="Pharos" id="P62807">
    <property type="development level" value="Tbio"/>
</dbReference>
<dbReference type="PRO" id="PR:P62807"/>
<dbReference type="Proteomes" id="UP000005640">
    <property type="component" value="Chromosome 6"/>
</dbReference>
<dbReference type="RNAct" id="P62807">
    <property type="molecule type" value="protein"/>
</dbReference>
<dbReference type="Bgee" id="ENSG00000180596">
    <property type="expression patterns" value="Expressed in calcaneal tendon and 120 other cell types or tissues"/>
</dbReference>
<dbReference type="ExpressionAtlas" id="P62807">
    <property type="expression patterns" value="baseline and differential"/>
</dbReference>
<dbReference type="GO" id="GO:0005829">
    <property type="term" value="C:cytosol"/>
    <property type="evidence" value="ECO:0000314"/>
    <property type="project" value="HPA"/>
</dbReference>
<dbReference type="GO" id="GO:0070062">
    <property type="term" value="C:extracellular exosome"/>
    <property type="evidence" value="ECO:0007005"/>
    <property type="project" value="UniProtKB"/>
</dbReference>
<dbReference type="GO" id="GO:0005615">
    <property type="term" value="C:extracellular space"/>
    <property type="evidence" value="ECO:0000314"/>
    <property type="project" value="UniProtKB"/>
</dbReference>
<dbReference type="GO" id="GO:0005654">
    <property type="term" value="C:nucleoplasm"/>
    <property type="evidence" value="ECO:0000314"/>
    <property type="project" value="HPA"/>
</dbReference>
<dbReference type="GO" id="GO:0000786">
    <property type="term" value="C:nucleosome"/>
    <property type="evidence" value="ECO:0000303"/>
    <property type="project" value="UniProtKB"/>
</dbReference>
<dbReference type="GO" id="GO:0005634">
    <property type="term" value="C:nucleus"/>
    <property type="evidence" value="ECO:0007005"/>
    <property type="project" value="UniProtKB"/>
</dbReference>
<dbReference type="GO" id="GO:0003677">
    <property type="term" value="F:DNA binding"/>
    <property type="evidence" value="ECO:0000303"/>
    <property type="project" value="UniProtKB"/>
</dbReference>
<dbReference type="GO" id="GO:0042802">
    <property type="term" value="F:identical protein binding"/>
    <property type="evidence" value="ECO:0000353"/>
    <property type="project" value="IntAct"/>
</dbReference>
<dbReference type="GO" id="GO:0046982">
    <property type="term" value="F:protein heterodimerization activity"/>
    <property type="evidence" value="ECO:0007669"/>
    <property type="project" value="InterPro"/>
</dbReference>
<dbReference type="GO" id="GO:0030527">
    <property type="term" value="F:structural constituent of chromatin"/>
    <property type="evidence" value="ECO:0007669"/>
    <property type="project" value="InterPro"/>
</dbReference>
<dbReference type="GO" id="GO:0019731">
    <property type="term" value="P:antibacterial humoral response"/>
    <property type="evidence" value="ECO:0000314"/>
    <property type="project" value="UniProtKB"/>
</dbReference>
<dbReference type="GO" id="GO:0061844">
    <property type="term" value="P:antimicrobial humoral immune response mediated by antimicrobial peptide"/>
    <property type="evidence" value="ECO:0000314"/>
    <property type="project" value="UniProtKB"/>
</dbReference>
<dbReference type="GO" id="GO:0050830">
    <property type="term" value="P:defense response to Gram-positive bacterium"/>
    <property type="evidence" value="ECO:0000314"/>
    <property type="project" value="UniProtKB"/>
</dbReference>
<dbReference type="GO" id="GO:0002227">
    <property type="term" value="P:innate immune response in mucosa"/>
    <property type="evidence" value="ECO:0000314"/>
    <property type="project" value="UniProtKB"/>
</dbReference>
<dbReference type="GO" id="GO:0006334">
    <property type="term" value="P:nucleosome assembly"/>
    <property type="evidence" value="ECO:0000303"/>
    <property type="project" value="UniProtKB"/>
</dbReference>
<dbReference type="CDD" id="cd22910">
    <property type="entry name" value="HFD_H2B"/>
    <property type="match status" value="1"/>
</dbReference>
<dbReference type="FunFam" id="1.10.20.10:FF:000003">
    <property type="entry name" value="Histone H2B"/>
    <property type="match status" value="1"/>
</dbReference>
<dbReference type="Gene3D" id="1.10.20.10">
    <property type="entry name" value="Histone, subunit A"/>
    <property type="match status" value="1"/>
</dbReference>
<dbReference type="InterPro" id="IPR009072">
    <property type="entry name" value="Histone-fold"/>
</dbReference>
<dbReference type="InterPro" id="IPR007125">
    <property type="entry name" value="Histone_H2A/H2B/H3"/>
</dbReference>
<dbReference type="InterPro" id="IPR000558">
    <property type="entry name" value="Histone_H2B"/>
</dbReference>
<dbReference type="InterPro" id="IPR055333">
    <property type="entry name" value="HISTONE_H2B_site"/>
</dbReference>
<dbReference type="PANTHER" id="PTHR23428">
    <property type="entry name" value="HISTONE H2B"/>
    <property type="match status" value="1"/>
</dbReference>
<dbReference type="Pfam" id="PF00125">
    <property type="entry name" value="Histone"/>
    <property type="match status" value="1"/>
</dbReference>
<dbReference type="PRINTS" id="PR00621">
    <property type="entry name" value="HISTONEH2B"/>
</dbReference>
<dbReference type="SMART" id="SM00427">
    <property type="entry name" value="H2B"/>
    <property type="match status" value="1"/>
</dbReference>
<dbReference type="SUPFAM" id="SSF47113">
    <property type="entry name" value="Histone-fold"/>
    <property type="match status" value="1"/>
</dbReference>
<dbReference type="PROSITE" id="PS00357">
    <property type="entry name" value="HISTONE_H2B"/>
    <property type="match status" value="1"/>
</dbReference>
<accession>P62807</accession>
<accession>P02278</accession>
<accession>Q3B872</accession>
<accession>Q4VB69</accession>
<accession>Q93078</accession>
<accession>Q93080</accession>
<protein>
    <recommendedName>
        <fullName>Histone H2B type 1-C/E/F/G/I</fullName>
    </recommendedName>
    <alternativeName>
        <fullName>Histone H2B.1 A</fullName>
    </alternativeName>
    <alternativeName>
        <fullName>Histone H2B.a</fullName>
        <shortName>H2B/a</shortName>
    </alternativeName>
    <alternativeName>
        <fullName>Histone H2B.g</fullName>
        <shortName>H2B/g</shortName>
    </alternativeName>
    <alternativeName>
        <fullName>Histone H2B.h</fullName>
        <shortName>H2B/h</shortName>
    </alternativeName>
    <alternativeName>
        <fullName>Histone H2B.k</fullName>
        <shortName>H2B/k</shortName>
    </alternativeName>
    <alternativeName>
        <fullName>Histone H2B.l</fullName>
        <shortName>H2B/l</shortName>
    </alternativeName>
</protein>